<feature type="chain" id="PRO_0000114699" description="Histone deacetylase 4">
    <location>
        <begin position="1"/>
        <end position="1084"/>
    </location>
</feature>
<feature type="region of interest" description="Interaction with MEF2A" evidence="7">
    <location>
        <begin position="118"/>
        <end position="313"/>
    </location>
</feature>
<feature type="region of interest" description="Disordered" evidence="5">
    <location>
        <begin position="133"/>
        <end position="166"/>
    </location>
</feature>
<feature type="region of interest" description="Disordered" evidence="5">
    <location>
        <begin position="206"/>
        <end position="226"/>
    </location>
</feature>
<feature type="region of interest" description="Disordered" evidence="5">
    <location>
        <begin position="240"/>
        <end position="315"/>
    </location>
</feature>
<feature type="region of interest" description="Disordered" evidence="5">
    <location>
        <begin position="509"/>
        <end position="531"/>
    </location>
</feature>
<feature type="region of interest" description="Disordered" evidence="5">
    <location>
        <begin position="548"/>
        <end position="585"/>
    </location>
</feature>
<feature type="region of interest" description="Disordered" evidence="5">
    <location>
        <begin position="626"/>
        <end position="646"/>
    </location>
</feature>
<feature type="region of interest" description="Histone deacetylase">
    <location>
        <begin position="655"/>
        <end position="1084"/>
    </location>
</feature>
<feature type="region of interest" description="Disordered" evidence="5">
    <location>
        <begin position="1061"/>
        <end position="1084"/>
    </location>
</feature>
<feature type="coiled-coil region" evidence="4">
    <location>
        <begin position="67"/>
        <end position="177"/>
    </location>
</feature>
<feature type="short sequence motif" description="PxLPxI/L motif; mediates interaction with ANKRA2 and 14-3-3 proteins" evidence="18">
    <location>
        <begin position="349"/>
        <end position="354"/>
    </location>
</feature>
<feature type="short sequence motif" description="Nuclear export signal" evidence="1">
    <location>
        <begin position="1051"/>
        <end position="1084"/>
    </location>
</feature>
<feature type="compositionally biased region" description="Basic and acidic residues" evidence="5">
    <location>
        <begin position="133"/>
        <end position="163"/>
    </location>
</feature>
<feature type="compositionally biased region" description="Basic and acidic residues" evidence="5">
    <location>
        <begin position="259"/>
        <end position="274"/>
    </location>
</feature>
<feature type="compositionally biased region" description="Low complexity" evidence="5">
    <location>
        <begin position="290"/>
        <end position="312"/>
    </location>
</feature>
<feature type="compositionally biased region" description="Basic and acidic residues" evidence="5">
    <location>
        <begin position="516"/>
        <end position="531"/>
    </location>
</feature>
<feature type="compositionally biased region" description="Polar residues" evidence="5">
    <location>
        <begin position="629"/>
        <end position="641"/>
    </location>
</feature>
<feature type="active site" evidence="1">
    <location>
        <position position="803"/>
    </location>
</feature>
<feature type="binding site" evidence="1">
    <location>
        <position position="667"/>
    </location>
    <ligand>
        <name>Zn(2+)</name>
        <dbReference type="ChEBI" id="CHEBI:29105"/>
    </ligand>
</feature>
<feature type="binding site" evidence="1">
    <location>
        <position position="669"/>
    </location>
    <ligand>
        <name>Zn(2+)</name>
        <dbReference type="ChEBI" id="CHEBI:29105"/>
    </ligand>
</feature>
<feature type="binding site" evidence="1">
    <location>
        <position position="675"/>
    </location>
    <ligand>
        <name>Zn(2+)</name>
        <dbReference type="ChEBI" id="CHEBI:29105"/>
    </ligand>
</feature>
<feature type="binding site" evidence="1">
    <location>
        <position position="751"/>
    </location>
    <ligand>
        <name>Zn(2+)</name>
        <dbReference type="ChEBI" id="CHEBI:29105"/>
    </ligand>
</feature>
<feature type="modified residue" description="Phosphoserine" evidence="2">
    <location>
        <position position="210"/>
    </location>
</feature>
<feature type="modified residue" description="Phosphoserine; by CaMK4 and SIK1" evidence="9">
    <location>
        <position position="246"/>
    </location>
</feature>
<feature type="modified residue" description="Phosphoserine" evidence="18 32">
    <location>
        <position position="350"/>
    </location>
</feature>
<feature type="modified residue" description="Phosphoserine; by CaMK4 and SIK1" evidence="9">
    <location>
        <position position="467"/>
    </location>
</feature>
<feature type="modified residue" description="Phosphoserine" evidence="2">
    <location>
        <position position="565"/>
    </location>
</feature>
<feature type="modified residue" description="Phosphoserine; by CaMK4" evidence="9 31 33 34">
    <location>
        <position position="632"/>
    </location>
</feature>
<feature type="modified residue" description="Phosphoserine" evidence="31">
    <location>
        <position position="633"/>
    </location>
</feature>
<feature type="cross-link" description="Glycyl lysine isopeptide (Lys-Gly) (interchain with G-Cter in SUMO)" evidence="13">
    <location>
        <position position="559"/>
    </location>
</feature>
<feature type="splice variant" id="VSP_057290" description="In isoform 2." evidence="27">
    <location>
        <begin position="1"/>
        <end position="117"/>
    </location>
</feature>
<feature type="splice variant" id="VSP_057291" description="In isoform 2." evidence="27">
    <original>T</original>
    <variation>TDWYLS</variation>
    <location>
        <position position="431"/>
    </location>
</feature>
<feature type="sequence variant" id="VAR_087034" description="In NEDCHF; decreased interaction with YWHAB; dbSNP:rs2042442594." evidence="26">
    <original>T</original>
    <variation>K</variation>
    <location>
        <position position="244"/>
    </location>
</feature>
<feature type="sequence variant" id="VAR_087035" description="In NEDCHF; decreased interaction with YWHAB; dbSNP:rs2152917896." evidence="26">
    <original>E</original>
    <variation>G</variation>
    <location>
        <position position="247"/>
    </location>
</feature>
<feature type="sequence variant" id="VAR_087036" description="In NEDCHF; dbSNP:rs2152917882." evidence="26">
    <original>P</original>
    <variation>A</variation>
    <location>
        <position position="248"/>
    </location>
</feature>
<feature type="sequence variant" id="VAR_087037" description="In NEDCHF; dbSNP:rs1064797002." evidence="26">
    <original>P</original>
    <variation>L</variation>
    <location>
        <position position="248"/>
    </location>
</feature>
<feature type="sequence variant" id="VAR_036042" description="In a breast cancer sample; somatic mutation." evidence="14">
    <original>P</original>
    <variation>R</variation>
    <location>
        <position position="727"/>
    </location>
</feature>
<feature type="sequence variant" id="VAR_071965" description="In dbSNP:rs151043798." evidence="20">
    <original>V</original>
    <variation>I</variation>
    <location>
        <position position="754"/>
    </location>
</feature>
<feature type="mutagenesis site" description="Reduces phosphorylation and its subsequent nuclear export." evidence="9">
    <original>S</original>
    <variation>A</variation>
    <location>
        <position position="246"/>
    </location>
</feature>
<feature type="mutagenesis site" description="No effect on interaction with ANKRA2." evidence="18">
    <original>L</original>
    <variation>A</variation>
    <location>
        <position position="345"/>
    </location>
</feature>
<feature type="mutagenesis site" description="No effect on interaction with ANKRA2." evidence="18">
    <original>Y</original>
    <variation>A</variation>
    <location>
        <position position="346"/>
    </location>
</feature>
<feature type="mutagenesis site" description="No effect on interaction with ANKRA2." evidence="18">
    <original>T</original>
    <variation>A</variation>
    <location>
        <position position="347"/>
    </location>
</feature>
<feature type="mutagenesis site" description="No effect on interaction with ANKRA2." evidence="18">
    <original>S</original>
    <variation>A</variation>
    <location>
        <position position="348"/>
    </location>
</feature>
<feature type="mutagenesis site" description="May affect interaction with ANKRA2." evidence="18 23">
    <original>P</original>
    <variation>A</variation>
    <location>
        <position position="349"/>
    </location>
</feature>
<feature type="mutagenesis site" description="Decreased interaction with ANKRA2." evidence="18">
    <original>P</original>
    <variation>G</variation>
    <location>
        <position position="349"/>
    </location>
</feature>
<feature type="mutagenesis site" description="No effect on interaction with ANKRA2." evidence="18">
    <original>S</original>
    <variation>A</variation>
    <location>
        <position position="350"/>
    </location>
</feature>
<feature type="mutagenesis site" description="Loss of interaction with ANKRA2." evidence="18">
    <original>L</original>
    <variation>A</variation>
    <variation>G</variation>
    <location>
        <position position="351"/>
    </location>
</feature>
<feature type="mutagenesis site" description="Loss of interaction with ANKRA2." evidence="18">
    <original>P</original>
    <variation>A</variation>
    <location>
        <position position="352"/>
    </location>
</feature>
<feature type="mutagenesis site" description="No effect on interaction with ANKRA2." evidence="18">
    <original>N</original>
    <variation>A</variation>
    <location>
        <position position="353"/>
    </location>
</feature>
<feature type="mutagenesis site" description="May affect interaction with ANKRA2." evidence="18 23">
    <original>I</original>
    <variation>A</variation>
    <location>
        <position position="354"/>
    </location>
</feature>
<feature type="mutagenesis site" description="Loss of interaction with ANKRA2." evidence="18">
    <original>I</original>
    <variation>G</variation>
    <location>
        <position position="354"/>
    </location>
</feature>
<feature type="mutagenesis site" description="No effect on interaction with ANKRA2." evidence="18">
    <original>T</original>
    <variation>A</variation>
    <location>
        <position position="355"/>
    </location>
</feature>
<feature type="mutagenesis site" description="No effect on interaction with ANKRA2." evidence="18">
    <original>L</original>
    <variation>A</variation>
    <location>
        <position position="356"/>
    </location>
</feature>
<feature type="mutagenesis site" description="Reduces phosphorylation and its subsequent nuclear export." evidence="9 11">
    <original>S</original>
    <variation>A</variation>
    <location>
        <position position="467"/>
    </location>
</feature>
<feature type="mutagenesis site" description="Abolishes sumoylation and reduces the histone deacetylase activity." evidence="13">
    <original>K</original>
    <variation>R</variation>
    <location>
        <position position="559"/>
    </location>
</feature>
<feature type="mutagenesis site" description="Reduces phosphorylation and its subsequent nuclear export." evidence="9 11">
    <original>S</original>
    <variation>A</variation>
    <location>
        <position position="632"/>
    </location>
</feature>
<feature type="mutagenesis site" description="Abolishes histone deacetylase activity." evidence="8">
    <original>H</original>
    <variation>L</variation>
    <location>
        <position position="803"/>
    </location>
</feature>
<feature type="mutagenesis site" description="Reduces CaMK-dependent nuclear export." evidence="12">
    <original>V</original>
    <variation>A</variation>
    <location>
        <position position="1056"/>
    </location>
</feature>
<feature type="mutagenesis site" description="Reduces CaMK-dependent nuclear export." evidence="12">
    <original>L</original>
    <variation>A</variation>
    <location>
        <position position="1062"/>
    </location>
</feature>
<feature type="sequence conflict" description="In Ref. 1; AAD29046 and 2; BAA22957." evidence="28" ref="1 2">
    <original>A</original>
    <variation>T</variation>
    <location>
        <position position="373"/>
    </location>
</feature>
<feature type="helix" evidence="35">
    <location>
        <begin position="64"/>
        <end position="112"/>
    </location>
</feature>
<feature type="helix" evidence="35">
    <location>
        <begin position="115"/>
        <end position="121"/>
    </location>
</feature>
<feature type="turn" evidence="35">
    <location>
        <begin position="122"/>
        <end position="125"/>
    </location>
</feature>
<feature type="helix" evidence="35">
    <location>
        <begin position="126"/>
        <end position="128"/>
    </location>
</feature>
<feature type="turn" evidence="37">
    <location>
        <begin position="354"/>
        <end position="357"/>
    </location>
</feature>
<feature type="strand" evidence="36">
    <location>
        <begin position="652"/>
        <end position="657"/>
    </location>
</feature>
<feature type="helix" evidence="36">
    <location>
        <begin position="660"/>
        <end position="662"/>
    </location>
</feature>
<feature type="helix" evidence="38">
    <location>
        <begin position="672"/>
        <end position="674"/>
    </location>
</feature>
<feature type="helix" evidence="36">
    <location>
        <begin position="681"/>
        <end position="691"/>
    </location>
</feature>
<feature type="helix" evidence="36">
    <location>
        <begin position="694"/>
        <end position="697"/>
    </location>
</feature>
<feature type="strand" evidence="36">
    <location>
        <begin position="698"/>
        <end position="701"/>
    </location>
</feature>
<feature type="helix" evidence="36">
    <location>
        <begin position="708"/>
        <end position="711"/>
    </location>
</feature>
<feature type="turn" evidence="36">
    <location>
        <begin position="712"/>
        <end position="714"/>
    </location>
</feature>
<feature type="helix" evidence="36">
    <location>
        <begin position="717"/>
        <end position="724"/>
    </location>
</feature>
<feature type="helix" evidence="36">
    <location>
        <begin position="727"/>
        <end position="730"/>
    </location>
</feature>
<feature type="helix" evidence="36">
    <location>
        <begin position="737"/>
        <end position="745"/>
    </location>
</feature>
<feature type="strand" evidence="36">
    <location>
        <begin position="746"/>
        <end position="748"/>
    </location>
</feature>
<feature type="strand" evidence="36">
    <location>
        <begin position="754"/>
        <end position="756"/>
    </location>
</feature>
<feature type="helix" evidence="36">
    <location>
        <begin position="762"/>
        <end position="786"/>
    </location>
</feature>
<feature type="strand" evidence="36">
    <location>
        <begin position="789"/>
        <end position="795"/>
    </location>
</feature>
<feature type="strand" evidence="36">
    <location>
        <begin position="813"/>
        <end position="815"/>
    </location>
</feature>
<feature type="helix" evidence="36">
    <location>
        <begin position="817"/>
        <end position="828"/>
    </location>
</feature>
<feature type="strand" evidence="36">
    <location>
        <begin position="834"/>
        <end position="838"/>
    </location>
</feature>
<feature type="strand" evidence="36">
    <location>
        <begin position="840"/>
        <end position="842"/>
    </location>
</feature>
<feature type="helix" evidence="36">
    <location>
        <begin position="845"/>
        <end position="851"/>
    </location>
</feature>
<feature type="strand" evidence="36">
    <location>
        <begin position="857"/>
        <end position="864"/>
    </location>
</feature>
<feature type="helix" evidence="36">
    <location>
        <begin position="866"/>
        <end position="868"/>
    </location>
</feature>
<feature type="strand" evidence="39">
    <location>
        <begin position="870"/>
        <end position="872"/>
    </location>
</feature>
<feature type="helix" evidence="36">
    <location>
        <begin position="883"/>
        <end position="885"/>
    </location>
</feature>
<feature type="strand" evidence="36">
    <location>
        <begin position="889"/>
        <end position="894"/>
    </location>
</feature>
<feature type="strand" evidence="36">
    <location>
        <begin position="898"/>
        <end position="900"/>
    </location>
</feature>
<feature type="helix" evidence="36">
    <location>
        <begin position="904"/>
        <end position="913"/>
    </location>
</feature>
<feature type="helix" evidence="36">
    <location>
        <begin position="915"/>
        <end position="922"/>
    </location>
</feature>
<feature type="strand" evidence="36">
    <location>
        <begin position="925"/>
        <end position="931"/>
    </location>
</feature>
<feature type="strand" evidence="36">
    <location>
        <begin position="936"/>
        <end position="938"/>
    </location>
</feature>
<feature type="turn" evidence="36">
    <location>
        <begin position="940"/>
        <end position="943"/>
    </location>
</feature>
<feature type="helix" evidence="36">
    <location>
        <begin position="950"/>
        <end position="961"/>
    </location>
</feature>
<feature type="helix" evidence="36">
    <location>
        <begin position="964"/>
        <end position="966"/>
    </location>
</feature>
<feature type="strand" evidence="36">
    <location>
        <begin position="968"/>
        <end position="972"/>
    </location>
</feature>
<feature type="helix" evidence="36">
    <location>
        <begin position="978"/>
        <end position="992"/>
    </location>
</feature>
<feature type="helix" evidence="36">
    <location>
        <begin position="1002"/>
        <end position="1006"/>
    </location>
</feature>
<feature type="helix" evidence="36">
    <location>
        <begin position="1011"/>
        <end position="1025"/>
    </location>
</feature>
<feature type="helix" evidence="36">
    <location>
        <begin position="1029"/>
        <end position="1031"/>
    </location>
</feature>
<feature type="helix" evidence="36">
    <location>
        <begin position="1042"/>
        <end position="1047"/>
    </location>
</feature>
<protein>
    <recommendedName>
        <fullName evidence="29">Histone deacetylase 4</fullName>
        <shortName>HD4</shortName>
        <ecNumber evidence="6 8 13">3.5.1.98</ecNumber>
    </recommendedName>
</protein>
<organism>
    <name type="scientific">Homo sapiens</name>
    <name type="common">Human</name>
    <dbReference type="NCBI Taxonomy" id="9606"/>
    <lineage>
        <taxon>Eukaryota</taxon>
        <taxon>Metazoa</taxon>
        <taxon>Chordata</taxon>
        <taxon>Craniata</taxon>
        <taxon>Vertebrata</taxon>
        <taxon>Euteleostomi</taxon>
        <taxon>Mammalia</taxon>
        <taxon>Eutheria</taxon>
        <taxon>Euarchontoglires</taxon>
        <taxon>Primates</taxon>
        <taxon>Haplorrhini</taxon>
        <taxon>Catarrhini</taxon>
        <taxon>Hominidae</taxon>
        <taxon>Homo</taxon>
    </lineage>
</organism>
<proteinExistence type="evidence at protein level"/>
<keyword id="KW-0002">3D-structure</keyword>
<keyword id="KW-0025">Alternative splicing</keyword>
<keyword id="KW-0156">Chromatin regulator</keyword>
<keyword id="KW-0175">Coiled coil</keyword>
<keyword id="KW-0963">Cytoplasm</keyword>
<keyword id="KW-0225">Disease variant</keyword>
<keyword id="KW-0887">Epilepsy</keyword>
<keyword id="KW-0378">Hydrolase</keyword>
<keyword id="KW-0991">Intellectual disability</keyword>
<keyword id="KW-1017">Isopeptide bond</keyword>
<keyword id="KW-0479">Metal-binding</keyword>
<keyword id="KW-0539">Nucleus</keyword>
<keyword id="KW-0597">Phosphoprotein</keyword>
<keyword id="KW-1267">Proteomics identification</keyword>
<keyword id="KW-1185">Reference proteome</keyword>
<keyword id="KW-0678">Repressor</keyword>
<keyword id="KW-0804">Transcription</keyword>
<keyword id="KW-0805">Transcription regulation</keyword>
<keyword id="KW-0832">Ubl conjugation</keyword>
<keyword id="KW-0862">Zinc</keyword>
<comment type="function">
    <text evidence="8 21 24">Responsible for the deacetylation of lysine residues on the N-terminal part of the core histones (H2A, H2B, H3 and H4). Histone deacetylation gives a tag for epigenetic repression and plays an important role in transcriptional regulation, cell cycle progression and developmental events. Histone deacetylases act via the formation of large multiprotein complexes. Involved in muscle maturation via its interaction with the myocyte enhancer factors such as MEF2A, MEF2C and MEF2D. Involved in the MTA1-mediated epigenetic regulation of ESR1 expression in breast cancer. Deacetylates HSPA1A and HSPA1B at 'Lys-77' leading to their preferential binding to co-chaperone STUB1 (PubMed:27708256).</text>
</comment>
<comment type="catalytic activity">
    <reaction evidence="6 8 13">
        <text>N(6)-acetyl-L-lysyl-[histone] + H2O = L-lysyl-[histone] + acetate</text>
        <dbReference type="Rhea" id="RHEA:58196"/>
        <dbReference type="Rhea" id="RHEA-COMP:9845"/>
        <dbReference type="Rhea" id="RHEA-COMP:11338"/>
        <dbReference type="ChEBI" id="CHEBI:15377"/>
        <dbReference type="ChEBI" id="CHEBI:29969"/>
        <dbReference type="ChEBI" id="CHEBI:30089"/>
        <dbReference type="ChEBI" id="CHEBI:61930"/>
        <dbReference type="EC" id="3.5.1.98"/>
    </reaction>
    <physiologicalReaction direction="left-to-right" evidence="8 13">
        <dbReference type="Rhea" id="RHEA:58197"/>
    </physiologicalReaction>
</comment>
<comment type="subunit">
    <text evidence="2 3 7 8 9 10 15 16 18 21 23 24 25 26">Homodimer. Homodimerization via its N-terminal domain (PubMed:12032081). Interacts with MEF2A (PubMed:10487761). Interacts with MEF2C and MEF2D (PubMed:10523670). Interacts with AHRR (By similarity). Interacts with NR2C1 (PubMed:11463856). Interacts with HDAC7 (By similarity). Interacts with a 14-3-3 chaperone proteins in a phosphorylation dependent manner (PubMed:10958686). Interacts with 14-3-3 protein YWHAB (PubMed:33537682). Interacts with BTBD14B (By similarity). Interacts with KDM5B (PubMed:17373667). Interacts with MYOCD (By similarity). Interacts with MORC2 (PubMed:20110259). Interacts (via PxLPxI/L motif) with ANKRA2 (via ankyrin repeats). Interacts with CUL7 (as part of the 3M complex); negatively regulated by ANKRA2 (PubMed:25752541). Interacts with EP300 in the presence of TFAP2C (PubMed:24413532). Interacts with HSPA1A and HSPA1B leading to their deacetylation at 'Lys-77' (PubMed:27708256). Interacts with ZBTB7B; the interaction allows the recruitment of HDAC4 on CD8 loci for deacetylation and possible inhibition of CD8 genes expression (By similarity). Interacts with DHX36 (By similarity). Interacts with SIK3; this interaction leads to HDAC4 retention in the cytoplasm (By similarity). Interacts with ZNF638 (PubMed:30487602).</text>
</comment>
<comment type="interaction">
    <interactant intactId="EBI-308629">
        <id>P56524</id>
    </interactant>
    <interactant intactId="EBI-10215533">
        <id>Q9H9E1</id>
        <label>ANKRA2</label>
    </interactant>
    <organismsDiffer>false</organismsDiffer>
    <experiments>3</experiments>
</comment>
<comment type="interaction">
    <interactant intactId="EBI-308629">
        <id>P56524</id>
    </interactant>
    <interactant intactId="EBI-608057">
        <id>P10275</id>
        <label>AR</label>
    </interactant>
    <organismsDiffer>false</organismsDiffer>
    <experiments>4</experiments>
</comment>
<comment type="interaction">
    <interactant intactId="EBI-308629">
        <id>P56524</id>
    </interactant>
    <interactant intactId="EBI-1170906">
        <id>P15336</id>
        <label>ATF2</label>
    </interactant>
    <organismsDiffer>false</organismsDiffer>
    <experiments>2</experiments>
</comment>
<comment type="interaction">
    <interactant intactId="EBI-308629">
        <id>P56524</id>
    </interactant>
    <interactant intactId="EBI-765407">
        <id>P41182</id>
        <label>BCL6</label>
    </interactant>
    <organismsDiffer>false</organismsDiffer>
    <experiments>3</experiments>
</comment>
<comment type="interaction">
    <interactant intactId="EBI-308629">
        <id>P56524</id>
    </interactant>
    <interactant intactId="EBI-714781">
        <id>Q9HCU9</id>
        <label>BRMS1</label>
    </interactant>
    <organismsDiffer>false</organismsDiffer>
    <experiments>2</experiments>
</comment>
<comment type="interaction">
    <interactant intactId="EBI-308629">
        <id>P56524</id>
    </interactant>
    <interactant intactId="EBI-10171416">
        <id>Q96JN2-2</id>
        <label>CCDC136</label>
    </interactant>
    <organismsDiffer>false</organismsDiffer>
    <experiments>3</experiments>
</comment>
<comment type="interaction">
    <interactant intactId="EBI-308629">
        <id>P56524</id>
    </interactant>
    <interactant intactId="EBI-1181367">
        <id>Q01850</id>
        <label>CDR2</label>
    </interactant>
    <organismsDiffer>false</organismsDiffer>
    <experiments>3</experiments>
</comment>
<comment type="interaction">
    <interactant intactId="EBI-308629">
        <id>P56524</id>
    </interactant>
    <interactant intactId="EBI-743414">
        <id>O95967</id>
        <label>EFEMP2</label>
    </interactant>
    <organismsDiffer>false</organismsDiffer>
    <experiments>3</experiments>
</comment>
<comment type="interaction">
    <interactant intactId="EBI-308629">
        <id>P56524</id>
    </interactant>
    <interactant intactId="EBI-618309">
        <id>Q08379</id>
        <label>GOLGA2</label>
    </interactant>
    <organismsDiffer>false</organismsDiffer>
    <experiments>3</experiments>
</comment>
<comment type="interaction">
    <interactant intactId="EBI-308629">
        <id>P56524</id>
    </interactant>
    <interactant intactId="EBI-308629">
        <id>P56524</id>
        <label>HDAC4</label>
    </interactant>
    <organismsDiffer>false</organismsDiffer>
    <experiments>4</experiments>
</comment>
<comment type="interaction">
    <interactant intactId="EBI-308629">
        <id>P56524</id>
    </interactant>
    <interactant intactId="EBI-948001">
        <id>Q15323</id>
        <label>KRT31</label>
    </interactant>
    <organismsDiffer>false</organismsDiffer>
    <experiments>3</experiments>
</comment>
<comment type="interaction">
    <interactant intactId="EBI-308629">
        <id>P56524</id>
    </interactant>
    <interactant intactId="EBI-1047263">
        <id>O76015</id>
        <label>KRT38</label>
    </interactant>
    <organismsDiffer>false</organismsDiffer>
    <experiments>3</experiments>
</comment>
<comment type="interaction">
    <interactant intactId="EBI-308629">
        <id>P56524</id>
    </interactant>
    <interactant intactId="EBI-10171697">
        <id>Q6A162</id>
        <label>KRT40</label>
    </interactant>
    <organismsDiffer>false</organismsDiffer>
    <experiments>3</experiments>
</comment>
<comment type="interaction">
    <interactant intactId="EBI-308629">
        <id>P56524</id>
    </interactant>
    <interactant intactId="EBI-740738">
        <id>O95751</id>
        <label>LDOC1</label>
    </interactant>
    <organismsDiffer>false</organismsDiffer>
    <experiments>3</experiments>
</comment>
<comment type="interaction">
    <interactant intactId="EBI-308629">
        <id>P56524</id>
    </interactant>
    <interactant intactId="EBI-373498">
        <id>A9UHW6</id>
        <label>MIF4GD</label>
    </interactant>
    <organismsDiffer>false</organismsDiffer>
    <experiments>4</experiments>
</comment>
<comment type="interaction">
    <interactant intactId="EBI-308629">
        <id>P56524</id>
    </interactant>
    <interactant intactId="EBI-742948">
        <id>Q5JR59</id>
        <label>MTUS2</label>
    </interactant>
    <organismsDiffer>false</organismsDiffer>
    <experiments>3</experiments>
</comment>
<comment type="interaction">
    <interactant intactId="EBI-308629">
        <id>P56524</id>
    </interactant>
    <interactant intactId="EBI-302345">
        <id>Q8ND90</id>
        <label>PNMA1</label>
    </interactant>
    <organismsDiffer>false</organismsDiffer>
    <experiments>3</experiments>
</comment>
<comment type="interaction">
    <interactant intactId="EBI-308629">
        <id>P56524</id>
    </interactant>
    <interactant intactId="EBI-726876">
        <id>Q6NUQ1</id>
        <label>RINT1</label>
    </interactant>
    <organismsDiffer>false</organismsDiffer>
    <experiments>3</experiments>
</comment>
<comment type="interaction">
    <interactant intactId="EBI-308629">
        <id>P56524</id>
    </interactant>
    <interactant intactId="EBI-925990">
        <id>Q13761</id>
        <label>RUNX3</label>
    </interactant>
    <organismsDiffer>false</organismsDiffer>
    <experiments>9</experiments>
</comment>
<comment type="interaction">
    <interactant intactId="EBI-308629">
        <id>P56524</id>
    </interactant>
    <interactant intactId="EBI-476295">
        <id>P31947</id>
        <label>SFN</label>
    </interactant>
    <organismsDiffer>false</organismsDiffer>
    <experiments>8</experiments>
</comment>
<comment type="interaction">
    <interactant intactId="EBI-308629">
        <id>P56524</id>
    </interactant>
    <interactant intactId="EBI-80168">
        <id>P63279</id>
        <label>UBE2I</label>
    </interactant>
    <organismsDiffer>false</organismsDiffer>
    <experiments>3</experiments>
</comment>
<comment type="interaction">
    <interactant intactId="EBI-308629">
        <id>P56524</id>
    </interactant>
    <interactant intactId="EBI-359815">
        <id>P31946</id>
        <label>YWHAB</label>
    </interactant>
    <organismsDiffer>false</organismsDiffer>
    <experiments>6</experiments>
</comment>
<comment type="interaction">
    <interactant intactId="EBI-308629">
        <id>P56524</id>
    </interactant>
    <interactant intactId="EBI-356498">
        <id>P62258</id>
        <label>YWHAE</label>
    </interactant>
    <organismsDiffer>false</organismsDiffer>
    <experiments>9</experiments>
</comment>
<comment type="interaction">
    <interactant intactId="EBI-308629">
        <id>P56524</id>
    </interactant>
    <interactant intactId="EBI-359832">
        <id>P61981</id>
        <label>YWHAG</label>
    </interactant>
    <organismsDiffer>false</organismsDiffer>
    <experiments>13</experiments>
</comment>
<comment type="interaction">
    <interactant intactId="EBI-308629">
        <id>P56524</id>
    </interactant>
    <interactant intactId="EBI-306940">
        <id>Q04917</id>
        <label>YWHAH</label>
    </interactant>
    <organismsDiffer>false</organismsDiffer>
    <experiments>10</experiments>
</comment>
<comment type="interaction">
    <interactant intactId="EBI-308629">
        <id>P56524</id>
    </interactant>
    <interactant intactId="EBI-359854">
        <id>P27348</id>
        <label>YWHAQ</label>
    </interactant>
    <organismsDiffer>false</organismsDiffer>
    <experiments>6</experiments>
</comment>
<comment type="interaction">
    <interactant intactId="EBI-308629">
        <id>P56524</id>
    </interactant>
    <interactant intactId="EBI-347088">
        <id>P63104</id>
        <label>YWHAZ</label>
    </interactant>
    <organismsDiffer>false</organismsDiffer>
    <experiments>9</experiments>
</comment>
<comment type="interaction">
    <interactant intactId="EBI-308629">
        <id>P56524</id>
    </interactant>
    <interactant intactId="EBI-13941040">
        <id>O54946-2</id>
        <label>Dnajb6</label>
    </interactant>
    <organismsDiffer>true</organismsDiffer>
    <experiments>2</experiments>
</comment>
<comment type="interaction">
    <interactant intactId="EBI-308629">
        <id>P56524</id>
    </interactant>
    <interactant intactId="EBI-1185167">
        <id>Q8AZK7</id>
        <label>EBNA-LP</label>
    </interactant>
    <organismsDiffer>true</organismsDiffer>
    <experiments>5</experiments>
</comment>
<comment type="interaction">
    <interactant intactId="EBI-308629">
        <id>P56524</id>
    </interactant>
    <interactant intactId="EBI-6148881">
        <id>P08393</id>
        <label>ICP0</label>
    </interactant>
    <organismsDiffer>true</organismsDiffer>
    <experiments>3</experiments>
</comment>
<comment type="interaction">
    <interactant intactId="EBI-11953488">
        <id>P56524-2</id>
    </interactant>
    <interactant intactId="EBI-12809012">
        <id>Q8WXK1</id>
        <label>ASB15</label>
    </interactant>
    <organismsDiffer>false</organismsDiffer>
    <experiments>3</experiments>
</comment>
<comment type="interaction">
    <interactant intactId="EBI-11953488">
        <id>P56524-2</id>
    </interactant>
    <interactant intactId="EBI-742722">
        <id>Q9BUH8</id>
        <label>BEGAIN</label>
    </interactant>
    <organismsDiffer>false</organismsDiffer>
    <experiments>3</experiments>
</comment>
<comment type="interaction">
    <interactant intactId="EBI-11953488">
        <id>P56524-2</id>
    </interactant>
    <interactant intactId="EBI-11975051">
        <id>Q8TD16-2</id>
        <label>BICD2</label>
    </interactant>
    <organismsDiffer>false</organismsDiffer>
    <experiments>3</experiments>
</comment>
<comment type="interaction">
    <interactant intactId="EBI-11953488">
        <id>P56524-2</id>
    </interactant>
    <interactant intactId="EBI-2548012">
        <id>Q9H2G9</id>
        <label>BLZF1</label>
    </interactant>
    <organismsDiffer>false</organismsDiffer>
    <experiments>3</experiments>
</comment>
<comment type="interaction">
    <interactant intactId="EBI-11953488">
        <id>P56524-2</id>
    </interactant>
    <interactant intactId="EBI-10179719">
        <id>A2RRN7</id>
        <label>CADPS</label>
    </interactant>
    <organismsDiffer>false</organismsDiffer>
    <experiments>3</experiments>
</comment>
<comment type="interaction">
    <interactant intactId="EBI-11953488">
        <id>P56524-2</id>
    </interactant>
    <interactant intactId="EBI-739580">
        <id>Q13137</id>
        <label>CALCOCO2</label>
    </interactant>
    <organismsDiffer>false</organismsDiffer>
    <experiments>3</experiments>
</comment>
<comment type="interaction">
    <interactant intactId="EBI-11953488">
        <id>P56524-2</id>
    </interactant>
    <interactant intactId="EBI-11977221">
        <id>Q86Z20</id>
        <label>CCDC125</label>
    </interactant>
    <organismsDiffer>false</organismsDiffer>
    <experiments>3</experiments>
</comment>
<comment type="interaction">
    <interactant intactId="EBI-11953488">
        <id>P56524-2</id>
    </interactant>
    <interactant intactId="EBI-748961">
        <id>O95273</id>
        <label>CCNDBP1</label>
    </interactant>
    <organismsDiffer>false</organismsDiffer>
    <experiments>3</experiments>
</comment>
<comment type="interaction">
    <interactant intactId="EBI-11953488">
        <id>P56524-2</id>
    </interactant>
    <interactant intactId="EBI-2802782">
        <id>Q6NVV7</id>
        <label>CDPF1</label>
    </interactant>
    <organismsDiffer>false</organismsDiffer>
    <experiments>3</experiments>
</comment>
<comment type="interaction">
    <interactant intactId="EBI-11953488">
        <id>P56524-2</id>
    </interactant>
    <interactant intactId="EBI-1181367">
        <id>Q01850</id>
        <label>CDR2</label>
    </interactant>
    <organismsDiffer>false</organismsDiffer>
    <experiments>3</experiments>
</comment>
<comment type="interaction">
    <interactant intactId="EBI-11953488">
        <id>P56524-2</id>
    </interactant>
    <interactant intactId="EBI-11063830">
        <id>Q86X02</id>
        <label>CDR2L</label>
    </interactant>
    <organismsDiffer>false</organismsDiffer>
    <experiments>3</experiments>
</comment>
<comment type="interaction">
    <interactant intactId="EBI-11953488">
        <id>P56524-2</id>
    </interactant>
    <interactant intactId="EBI-739624">
        <id>Q8NHQ1</id>
        <label>CEP70</label>
    </interactant>
    <organismsDiffer>false</organismsDiffer>
    <experiments>3</experiments>
</comment>
<comment type="interaction">
    <interactant intactId="EBI-11953488">
        <id>P56524-2</id>
    </interactant>
    <interactant intactId="EBI-740680">
        <id>Q8WWB3</id>
        <label>DYDC1</label>
    </interactant>
    <organismsDiffer>false</organismsDiffer>
    <experiments>3</experiments>
</comment>
<comment type="interaction">
    <interactant intactId="EBI-11953488">
        <id>P56524-2</id>
    </interactant>
    <interactant intactId="EBI-2349927">
        <id>Q5JST6</id>
        <label>EFHC2</label>
    </interactant>
    <organismsDiffer>false</organismsDiffer>
    <experiments>3</experiments>
</comment>
<comment type="interaction">
    <interactant intactId="EBI-11953488">
        <id>P56524-2</id>
    </interactant>
    <interactant intactId="EBI-11958845">
        <id>O94868-3</id>
        <label>FCHSD2</label>
    </interactant>
    <organismsDiffer>false</organismsDiffer>
    <experiments>3</experiments>
</comment>
<comment type="interaction">
    <interactant intactId="EBI-11953488">
        <id>P56524-2</id>
    </interactant>
    <interactant intactId="EBI-5661036">
        <id>A1L4K1</id>
        <label>FSD2</label>
    </interactant>
    <organismsDiffer>false</organismsDiffer>
    <experiments>3</experiments>
</comment>
<comment type="interaction">
    <interactant intactId="EBI-11953488">
        <id>P56524-2</id>
    </interactant>
    <interactant intactId="EBI-618309">
        <id>Q08379</id>
        <label>GOLGA2</label>
    </interactant>
    <organismsDiffer>false</organismsDiffer>
    <experiments>3</experiments>
</comment>
<comment type="interaction">
    <interactant intactId="EBI-11953488">
        <id>P56524-2</id>
    </interactant>
    <interactant intactId="EBI-5916454">
        <id>A6NEM1</id>
        <label>GOLGA6L9</label>
    </interactant>
    <organismsDiffer>false</organismsDiffer>
    <experiments>3</experiments>
</comment>
<comment type="interaction">
    <interactant intactId="EBI-11953488">
        <id>P56524-2</id>
    </interactant>
    <interactant intactId="EBI-717919">
        <id>Q4V328</id>
        <label>GRIPAP1</label>
    </interactant>
    <organismsDiffer>false</organismsDiffer>
    <experiments>3</experiments>
</comment>
<comment type="interaction">
    <interactant intactId="EBI-11953488">
        <id>P56524-2</id>
    </interactant>
    <interactant intactId="EBI-712814">
        <id>P54257</id>
        <label>HAP1</label>
    </interactant>
    <organismsDiffer>false</organismsDiffer>
    <experiments>3</experiments>
</comment>
<comment type="interaction">
    <interactant intactId="EBI-11953488">
        <id>P56524-2</id>
    </interactant>
    <interactant intactId="EBI-10961706">
        <id>Q96ED9-2</id>
        <label>HOOK2</label>
    </interactant>
    <organismsDiffer>false</organismsDiffer>
    <experiments>3</experiments>
</comment>
<comment type="interaction">
    <interactant intactId="EBI-11953488">
        <id>P56524-2</id>
    </interactant>
    <interactant intactId="EBI-7116203">
        <id>O75031</id>
        <label>HSF2BP</label>
    </interactant>
    <organismsDiffer>false</organismsDiffer>
    <experiments>3</experiments>
</comment>
<comment type="interaction">
    <interactant intactId="EBI-11953488">
        <id>P56524-2</id>
    </interactant>
    <interactant intactId="EBI-6509505">
        <id>Q0VD86</id>
        <label>INCA1</label>
    </interactant>
    <organismsDiffer>false</organismsDiffer>
    <experiments>3</experiments>
</comment>
<comment type="interaction">
    <interactant intactId="EBI-11953488">
        <id>P56524-2</id>
    </interactant>
    <interactant intactId="EBI-3044087">
        <id>Q7Z3Y8</id>
        <label>KRT27</label>
    </interactant>
    <organismsDiffer>false</organismsDiffer>
    <experiments>3</experiments>
</comment>
<comment type="interaction">
    <interactant intactId="EBI-11953488">
        <id>P56524-2</id>
    </interactant>
    <interactant intactId="EBI-948001">
        <id>Q15323</id>
        <label>KRT31</label>
    </interactant>
    <organismsDiffer>false</organismsDiffer>
    <experiments>3</experiments>
</comment>
<comment type="interaction">
    <interactant intactId="EBI-11953488">
        <id>P56524-2</id>
    </interactant>
    <interactant intactId="EBI-1049638">
        <id>Q14525</id>
        <label>KRT33B</label>
    </interactant>
    <organismsDiffer>false</organismsDiffer>
    <experiments>3</experiments>
</comment>
<comment type="interaction">
    <interactant intactId="EBI-11953488">
        <id>P56524-2</id>
    </interactant>
    <interactant intactId="EBI-1047093">
        <id>O76011</id>
        <label>KRT34</label>
    </interactant>
    <organismsDiffer>false</organismsDiffer>
    <experiments>3</experiments>
</comment>
<comment type="interaction">
    <interactant intactId="EBI-11953488">
        <id>P56524-2</id>
    </interactant>
    <interactant intactId="EBI-1058674">
        <id>Q92764</id>
        <label>KRT35</label>
    </interactant>
    <organismsDiffer>false</organismsDiffer>
    <experiments>3</experiments>
</comment>
<comment type="interaction">
    <interactant intactId="EBI-11953488">
        <id>P56524-2</id>
    </interactant>
    <interactant intactId="EBI-10171697">
        <id>Q6A162</id>
        <label>KRT40</label>
    </interactant>
    <organismsDiffer>false</organismsDiffer>
    <experiments>3</experiments>
</comment>
<comment type="interaction">
    <interactant intactId="EBI-11953488">
        <id>P56524-2</id>
    </interactant>
    <interactant intactId="EBI-740738">
        <id>O95751</id>
        <label>LDOC1</label>
    </interactant>
    <organismsDiffer>false</organismsDiffer>
    <experiments>3</experiments>
</comment>
<comment type="interaction">
    <interactant intactId="EBI-11953488">
        <id>P56524-2</id>
    </interactant>
    <interactant intactId="EBI-12232917">
        <id>Q02078-5</id>
        <label>MEF2A</label>
    </interactant>
    <organismsDiffer>false</organismsDiffer>
    <experiments>3</experiments>
</comment>
<comment type="interaction">
    <interactant intactId="EBI-11953488">
        <id>P56524-2</id>
    </interactant>
    <interactant intactId="EBI-6427785">
        <id>Q02080</id>
        <label>MEF2B</label>
    </interactant>
    <organismsDiffer>false</organismsDiffer>
    <experiments>3</experiments>
</comment>
<comment type="interaction">
    <interactant intactId="EBI-11953488">
        <id>P56524-2</id>
    </interactant>
    <interactant intactId="EBI-2684075">
        <id>Q06413</id>
        <label>MEF2C</label>
    </interactant>
    <organismsDiffer>false</organismsDiffer>
    <experiments>5</experiments>
</comment>
<comment type="interaction">
    <interactant intactId="EBI-11953488">
        <id>P56524-2</id>
    </interactant>
    <interactant intactId="EBI-10172526">
        <id>Q9UJV3-2</id>
        <label>MID2</label>
    </interactant>
    <organismsDiffer>false</organismsDiffer>
    <experiments>3</experiments>
</comment>
<comment type="interaction">
    <interactant intactId="EBI-11953488">
        <id>P56524-2</id>
    </interactant>
    <interactant intactId="EBI-11522433">
        <id>Q5JR59-3</id>
        <label>MTUS2</label>
    </interactant>
    <organismsDiffer>false</organismsDiffer>
    <experiments>3</experiments>
</comment>
<comment type="interaction">
    <interactant intactId="EBI-11953488">
        <id>P56524-2</id>
    </interactant>
    <interactant intactId="EBI-10271199">
        <id>Q8NI38</id>
        <label>NFKBID</label>
    </interactant>
    <organismsDiffer>false</organismsDiffer>
    <experiments>3</experiments>
</comment>
<comment type="interaction">
    <interactant intactId="EBI-11953488">
        <id>P56524-2</id>
    </interactant>
    <interactant intactId="EBI-79165">
        <id>Q9NRD5</id>
        <label>PICK1</label>
    </interactant>
    <organismsDiffer>false</organismsDiffer>
    <experiments>3</experiments>
</comment>
<comment type="interaction">
    <interactant intactId="EBI-11953488">
        <id>P56524-2</id>
    </interactant>
    <interactant intactId="EBI-2212028">
        <id>Q9Y2D8</id>
        <label>SSX2IP</label>
    </interactant>
    <organismsDiffer>false</organismsDiffer>
    <experiments>3</experiments>
</comment>
<comment type="interaction">
    <interactant intactId="EBI-11953488">
        <id>P56524-2</id>
    </interactant>
    <interactant intactId="EBI-1105213">
        <id>Q9UBB9</id>
        <label>TFIP11</label>
    </interactant>
    <organismsDiffer>false</organismsDiffer>
    <experiments>3</experiments>
</comment>
<comment type="interaction">
    <interactant intactId="EBI-11953488">
        <id>P56524-2</id>
    </interactant>
    <interactant intactId="EBI-11741437">
        <id>Q08117-2</id>
        <label>TLE5</label>
    </interactant>
    <organismsDiffer>false</organismsDiffer>
    <experiments>3</experiments>
</comment>
<comment type="interaction">
    <interactant intactId="EBI-11953488">
        <id>P56524-2</id>
    </interactant>
    <interactant intactId="EBI-492476">
        <id>Q96RU7</id>
        <label>TRIB3</label>
    </interactant>
    <organismsDiffer>false</organismsDiffer>
    <experiments>3</experiments>
</comment>
<comment type="interaction">
    <interactant intactId="EBI-11953488">
        <id>P56524-2</id>
    </interactant>
    <interactant intactId="EBI-719493">
        <id>P14373</id>
        <label>TRIM27</label>
    </interactant>
    <organismsDiffer>false</organismsDiffer>
    <experiments>3</experiments>
</comment>
<comment type="interaction">
    <interactant intactId="EBI-11953488">
        <id>P56524-2</id>
    </interactant>
    <interactant intactId="EBI-744794">
        <id>Q9BZW7</id>
        <label>TSGA10</label>
    </interactant>
    <organismsDiffer>false</organismsDiffer>
    <experiments>3</experiments>
</comment>
<comment type="interaction">
    <interactant intactId="EBI-11953488">
        <id>P56524-2</id>
    </interactant>
    <interactant intactId="EBI-2799833">
        <id>Q8N1B4</id>
        <label>VPS52</label>
    </interactant>
    <organismsDiffer>false</organismsDiffer>
    <experiments>3</experiments>
</comment>
<comment type="interaction">
    <interactant intactId="EBI-11953488">
        <id>P56524-2</id>
    </interactant>
    <interactant intactId="EBI-356498">
        <id>P62258</id>
        <label>YWHAE</label>
    </interactant>
    <organismsDiffer>false</organismsDiffer>
    <experiments>3</experiments>
</comment>
<comment type="interaction">
    <interactant intactId="EBI-11953488">
        <id>P56524-2</id>
    </interactant>
    <interactant intactId="EBI-12030590">
        <id>Q9H0C1</id>
        <label>ZMYND12</label>
    </interactant>
    <organismsDiffer>false</organismsDiffer>
    <experiments>3</experiments>
</comment>
<comment type="subcellular location">
    <subcellularLocation>
        <location>Nucleus</location>
    </subcellularLocation>
    <subcellularLocation>
        <location>Cytoplasm</location>
    </subcellularLocation>
    <text evidence="2">Shuttles between the nucleus and the cytoplasm. Upon muscle cells differentiation, it accumulates in the nuclei of myotubes, suggesting a positive role of nuclear HDAC4 in muscle differentiation. The export to cytoplasm depends on the interaction with a 14-3-3 chaperone protein and is due to its phosphorylation at Ser-246, Ser-467 and Ser-632 by CaMK4 and SIK1. The nuclear localization probably depends on sumoylation. Interaction with SIK3 leads to HDAC4 retention in the cytoplasm (By similarity).</text>
</comment>
<comment type="alternative products">
    <event type="alternative splicing"/>
    <isoform>
        <id>P56524-1</id>
        <name>1</name>
        <sequence type="displayed"/>
    </isoform>
    <isoform>
        <id>P56524-2</id>
        <name>2</name>
        <sequence type="described" ref="VSP_057290 VSP_057291"/>
    </isoform>
</comment>
<comment type="tissue specificity">
    <text>Ubiquitous.</text>
</comment>
<comment type="domain">
    <text>The nuclear export sequence mediates the shuttling between the nucleus and the cytoplasm.</text>
</comment>
<comment type="domain">
    <text evidence="18">The PxLPxI/L motif mediates interaction with ankyrin repeats of ANKRA2.</text>
</comment>
<comment type="PTM">
    <text evidence="9 18">Phosphorylated by CaMK4 at Ser-246, Ser-467 and Ser-632. Phosphorylation at other residues by CaMK2D is required for the interaction with 14-3-3. Phosphorylation at Ser-350, within the PxLPxI/L motif, impairs the binding of ANKRA2 but generates a high-affinity docking site for 14-3-3.</text>
</comment>
<comment type="PTM">
    <text evidence="13">Sumoylation on Lys-559 is promoted by the E3 SUMO-protein ligase RANBP2, and prevented by phosphorylation by CaMK4.</text>
</comment>
<comment type="disease">
    <text evidence="17 19 22">HDAC4 point mutations and chromosomal microdeletions encompassing this gene have been found in patients with brachydactyly and intellectual disability syndrome (PubMed:20691407, PubMed:23188045, PubMed:24715439). However, HDAC4 haploinsufficiency is not fully penetrant and multiple genes may contribute to manifestation of the full phenotypic spectrum (PubMed:23188045, PubMed:24715439).</text>
</comment>
<comment type="disease" evidence="26">
    <disease id="DI-06368">
        <name>Neurodevelopmental disorder with central hypotonia and dysmorphic facies</name>
        <acronym>NEDCHF</acronym>
        <description>An autosomal dominant disease characterized by global developmental delay, impaired intellectual development, seizures, distinctive facial features, scoliosis, delayed closure of the anterior fontanel, and non-specific brain abnormalities.</description>
        <dbReference type="MIM" id="619797"/>
    </disease>
    <text>The disease is caused by variants affecting the gene represented in this entry.</text>
</comment>
<comment type="similarity">
    <text evidence="28">Belongs to the histone deacetylase family. HD type 2 subfamily.</text>
</comment>
<comment type="sequence caution" evidence="28">
    <conflict type="erroneous initiation">
        <sequence resource="EMBL-CDS" id="BAA22957"/>
    </conflict>
</comment>
<name>HDAC4_HUMAN</name>
<dbReference type="EC" id="3.5.1.98" evidence="6 8 13"/>
<dbReference type="EMBL" id="AF132607">
    <property type="protein sequence ID" value="AAD29046.1"/>
    <property type="molecule type" value="mRNA"/>
</dbReference>
<dbReference type="EMBL" id="AB006626">
    <property type="protein sequence ID" value="BAA22957.2"/>
    <property type="status" value="ALT_INIT"/>
    <property type="molecule type" value="mRNA"/>
</dbReference>
<dbReference type="EMBL" id="AC017028">
    <property type="status" value="NOT_ANNOTATED_CDS"/>
    <property type="molecule type" value="Genomic_DNA"/>
</dbReference>
<dbReference type="EMBL" id="AC062017">
    <property type="status" value="NOT_ANNOTATED_CDS"/>
    <property type="molecule type" value="Genomic_DNA"/>
</dbReference>
<dbReference type="EMBL" id="KF510800">
    <property type="status" value="NOT_ANNOTATED_CDS"/>
    <property type="molecule type" value="Genomic_DNA"/>
</dbReference>
<dbReference type="EMBL" id="KF510801">
    <property type="status" value="NOT_ANNOTATED_CDS"/>
    <property type="molecule type" value="Genomic_DNA"/>
</dbReference>
<dbReference type="EMBL" id="CH471063">
    <property type="protein sequence ID" value="EAW71165.1"/>
    <property type="molecule type" value="Genomic_DNA"/>
</dbReference>
<dbReference type="EMBL" id="BC039904">
    <property type="protein sequence ID" value="AAH39904.1"/>
    <property type="molecule type" value="mRNA"/>
</dbReference>
<dbReference type="CCDS" id="CCDS2529.1">
    <molecule id="P56524-1"/>
</dbReference>
<dbReference type="RefSeq" id="NP_001365345.1">
    <molecule id="P56524-1"/>
    <property type="nucleotide sequence ID" value="NM_001378416.1"/>
</dbReference>
<dbReference type="RefSeq" id="NP_001365346.1">
    <molecule id="P56524-1"/>
    <property type="nucleotide sequence ID" value="NM_001378417.1"/>
</dbReference>
<dbReference type="RefSeq" id="NP_006028.2">
    <molecule id="P56524-1"/>
    <property type="nucleotide sequence ID" value="NM_006037.4"/>
</dbReference>
<dbReference type="RefSeq" id="XP_047302435.1">
    <molecule id="P56524-1"/>
    <property type="nucleotide sequence ID" value="XM_047446479.1"/>
</dbReference>
<dbReference type="RefSeq" id="XP_054200706.1">
    <molecule id="P56524-1"/>
    <property type="nucleotide sequence ID" value="XM_054344731.1"/>
</dbReference>
<dbReference type="PDB" id="2H8N">
    <property type="method" value="X-ray"/>
    <property type="resolution" value="2.60 A"/>
    <property type="chains" value="A/B/C/D=62-153"/>
</dbReference>
<dbReference type="PDB" id="2O94">
    <property type="method" value="X-ray"/>
    <property type="resolution" value="3.00 A"/>
    <property type="chains" value="A/B/C/D=62-153"/>
</dbReference>
<dbReference type="PDB" id="2VQJ">
    <property type="method" value="X-ray"/>
    <property type="resolution" value="2.10 A"/>
    <property type="chains" value="A=648-1057"/>
</dbReference>
<dbReference type="PDB" id="2VQM">
    <property type="method" value="X-ray"/>
    <property type="resolution" value="1.80 A"/>
    <property type="chains" value="A=648-1057"/>
</dbReference>
<dbReference type="PDB" id="2VQO">
    <property type="method" value="X-ray"/>
    <property type="resolution" value="2.15 A"/>
    <property type="chains" value="A/B=648-1057"/>
</dbReference>
<dbReference type="PDB" id="2VQQ">
    <property type="method" value="X-ray"/>
    <property type="resolution" value="1.90 A"/>
    <property type="chains" value="A/B=648-1057"/>
</dbReference>
<dbReference type="PDB" id="2VQV">
    <property type="method" value="X-ray"/>
    <property type="resolution" value="3.30 A"/>
    <property type="chains" value="A/B=648-1057"/>
</dbReference>
<dbReference type="PDB" id="2VQW">
    <property type="method" value="X-ray"/>
    <property type="resolution" value="3.00 A"/>
    <property type="chains" value="G=648-1057"/>
</dbReference>
<dbReference type="PDB" id="3UXG">
    <property type="method" value="X-ray"/>
    <property type="resolution" value="1.85 A"/>
    <property type="chains" value="B=343-359"/>
</dbReference>
<dbReference type="PDB" id="3UZD">
    <property type="method" value="X-ray"/>
    <property type="resolution" value="1.86 A"/>
    <property type="chains" value="B=343-359"/>
</dbReference>
<dbReference type="PDB" id="3V31">
    <property type="method" value="X-ray"/>
    <property type="resolution" value="1.57 A"/>
    <property type="chains" value="B=343-359"/>
</dbReference>
<dbReference type="PDB" id="4CBT">
    <property type="method" value="X-ray"/>
    <property type="resolution" value="3.03 A"/>
    <property type="chains" value="A/B/C=648-1033"/>
</dbReference>
<dbReference type="PDB" id="4CBY">
    <property type="method" value="X-ray"/>
    <property type="resolution" value="2.72 A"/>
    <property type="chains" value="A/B/C/D=648-1033"/>
</dbReference>
<dbReference type="PDB" id="5A2S">
    <property type="method" value="X-ray"/>
    <property type="resolution" value="2.65 A"/>
    <property type="chains" value="A/B=648-1033"/>
</dbReference>
<dbReference type="PDB" id="5ZOO">
    <property type="method" value="X-ray"/>
    <property type="resolution" value="1.85 A"/>
    <property type="chains" value="G=652-1053"/>
</dbReference>
<dbReference type="PDB" id="5ZOP">
    <property type="method" value="X-ray"/>
    <property type="resolution" value="2.70 A"/>
    <property type="chains" value="G=652-1050"/>
</dbReference>
<dbReference type="PDB" id="6FYZ">
    <property type="method" value="X-ray"/>
    <property type="resolution" value="2.15 A"/>
    <property type="chains" value="A/B/C=648-1033"/>
</dbReference>
<dbReference type="PDB" id="7XUZ">
    <property type="method" value="X-ray"/>
    <property type="resolution" value="3.59 A"/>
    <property type="chains" value="A/B=62-192"/>
</dbReference>
<dbReference type="PDB" id="8PDE">
    <property type="method" value="X-ray"/>
    <property type="resolution" value="2.40 A"/>
    <property type="chains" value="C/X=167-183"/>
</dbReference>
<dbReference type="PDBsum" id="2H8N"/>
<dbReference type="PDBsum" id="2O94"/>
<dbReference type="PDBsum" id="2VQJ"/>
<dbReference type="PDBsum" id="2VQM"/>
<dbReference type="PDBsum" id="2VQO"/>
<dbReference type="PDBsum" id="2VQQ"/>
<dbReference type="PDBsum" id="2VQV"/>
<dbReference type="PDBsum" id="2VQW"/>
<dbReference type="PDBsum" id="3UXG"/>
<dbReference type="PDBsum" id="3UZD"/>
<dbReference type="PDBsum" id="3V31"/>
<dbReference type="PDBsum" id="4CBT"/>
<dbReference type="PDBsum" id="4CBY"/>
<dbReference type="PDBsum" id="5A2S"/>
<dbReference type="PDBsum" id="5ZOO"/>
<dbReference type="PDBsum" id="5ZOP"/>
<dbReference type="PDBsum" id="6FYZ"/>
<dbReference type="PDBsum" id="7XUZ"/>
<dbReference type="PDBsum" id="8PDE"/>
<dbReference type="SMR" id="P56524"/>
<dbReference type="BioGRID" id="115106">
    <property type="interactions" value="405"/>
</dbReference>
<dbReference type="CORUM" id="P56524"/>
<dbReference type="DIP" id="DIP-34565N"/>
<dbReference type="ELM" id="P56524"/>
<dbReference type="FunCoup" id="P56524">
    <property type="interactions" value="3160"/>
</dbReference>
<dbReference type="IntAct" id="P56524">
    <property type="interactions" value="96"/>
</dbReference>
<dbReference type="MINT" id="P56524"/>
<dbReference type="STRING" id="9606.ENSP00000264606"/>
<dbReference type="BindingDB" id="P56524"/>
<dbReference type="ChEMBL" id="CHEMBL3524"/>
<dbReference type="DrugBank" id="DB08613">
    <property type="generic name" value="2,2,2-TRIFLUORO-1-{5-[(3-PHENYL-5,6-DIHYDROIMIDAZO[1,2-A]PYRAZIN-7(8H)-YL)CARBONYL]THIOPHEN-2-YL}ETHANE-1,1-DIOL"/>
</dbReference>
<dbReference type="DrugBank" id="DB07553">
    <property type="generic name" value="9,9,9-TRIFLUORO-8-OXO-N-PHENYLNONANAMIDE"/>
</dbReference>
<dbReference type="DrugBank" id="DB12565">
    <property type="generic name" value="Abexinostat"/>
</dbReference>
<dbReference type="DrugBank" id="DB05015">
    <property type="generic name" value="Belinostat"/>
</dbReference>
<dbReference type="DrugBank" id="DB01262">
    <property type="generic name" value="Decitabine"/>
</dbReference>
<dbReference type="DrugBank" id="DB11841">
    <property type="generic name" value="Entinostat"/>
</dbReference>
<dbReference type="DrugBank" id="DB12645">
    <property type="generic name" value="Givinostat"/>
</dbReference>
<dbReference type="DrugBank" id="DB14979">
    <property type="generic name" value="Martinostat"/>
</dbReference>
<dbReference type="DrugBank" id="DB07879">
    <property type="generic name" value="N-hydroxy-5-[(3-phenyl-5,6-dihydroimidazo[1,2-a]pyrazin-7(8H)-yl)carbonyl]thiophene-2-carboxamide"/>
</dbReference>
<dbReference type="DrugBank" id="DB06603">
    <property type="generic name" value="Panobinostat"/>
</dbReference>
<dbReference type="DrugBank" id="DB06819">
    <property type="generic name" value="Phenylbutyric acid"/>
</dbReference>
<dbReference type="DrugBank" id="DB03766">
    <property type="generic name" value="Propanoic acid"/>
</dbReference>
<dbReference type="DrugBank" id="DB12847">
    <property type="generic name" value="Pyroxamide"/>
</dbReference>
<dbReference type="DrugBank" id="DB06176">
    <property type="generic name" value="Romidepsin"/>
</dbReference>
<dbReference type="DrugBank" id="DB00313">
    <property type="generic name" value="Valproic acid"/>
</dbReference>
<dbReference type="DrugBank" id="DB02546">
    <property type="generic name" value="Vorinostat"/>
</dbReference>
<dbReference type="DrugBank" id="DB01593">
    <property type="generic name" value="Zinc"/>
</dbReference>
<dbReference type="DrugBank" id="DB14487">
    <property type="generic name" value="Zinc acetate"/>
</dbReference>
<dbReference type="DrugBank" id="DB14533">
    <property type="generic name" value="Zinc chloride"/>
</dbReference>
<dbReference type="DrugBank" id="DB14548">
    <property type="generic name" value="Zinc sulfate, unspecified form"/>
</dbReference>
<dbReference type="DrugCentral" id="P56524"/>
<dbReference type="GuidetoPHARMACOLOGY" id="2659"/>
<dbReference type="GlyCosmos" id="P56524">
    <property type="glycosylation" value="1 site, 1 glycan"/>
</dbReference>
<dbReference type="GlyGen" id="P56524">
    <property type="glycosylation" value="5 sites, 1 O-linked glycan (4 sites)"/>
</dbReference>
<dbReference type="iPTMnet" id="P56524"/>
<dbReference type="MetOSite" id="P56524"/>
<dbReference type="PhosphoSitePlus" id="P56524"/>
<dbReference type="BioMuta" id="HDAC4"/>
<dbReference type="DMDM" id="259016348"/>
<dbReference type="jPOST" id="P56524"/>
<dbReference type="MassIVE" id="P56524"/>
<dbReference type="PaxDb" id="9606-ENSP00000264606"/>
<dbReference type="PeptideAtlas" id="P56524"/>
<dbReference type="ProteomicsDB" id="24301"/>
<dbReference type="ProteomicsDB" id="56920">
    <molecule id="P56524-1"/>
</dbReference>
<dbReference type="ProteomicsDB" id="70417"/>
<dbReference type="Pumba" id="P56524"/>
<dbReference type="ABCD" id="P56524">
    <property type="antibodies" value="1 sequenced antibody"/>
</dbReference>
<dbReference type="Antibodypedia" id="3835">
    <property type="antibodies" value="1229 antibodies from 51 providers"/>
</dbReference>
<dbReference type="DNASU" id="9759"/>
<dbReference type="Ensembl" id="ENST00000345617.7">
    <molecule id="P56524-1"/>
    <property type="protein sequence ID" value="ENSP00000264606.3"/>
    <property type="gene ID" value="ENSG00000068024.18"/>
</dbReference>
<dbReference type="GeneID" id="9759"/>
<dbReference type="KEGG" id="hsa:9759"/>
<dbReference type="UCSC" id="uc002vyk.4">
    <molecule id="P56524-1"/>
    <property type="organism name" value="human"/>
</dbReference>
<dbReference type="AGR" id="HGNC:14063"/>
<dbReference type="CTD" id="9759"/>
<dbReference type="DisGeNET" id="9759"/>
<dbReference type="GeneCards" id="HDAC4"/>
<dbReference type="HGNC" id="HGNC:14063">
    <property type="gene designation" value="HDAC4"/>
</dbReference>
<dbReference type="HPA" id="ENSG00000068024">
    <property type="expression patterns" value="Tissue enhanced (skeletal)"/>
</dbReference>
<dbReference type="MalaCards" id="HDAC4"/>
<dbReference type="MIM" id="605314">
    <property type="type" value="gene"/>
</dbReference>
<dbReference type="MIM" id="619797">
    <property type="type" value="phenotype"/>
</dbReference>
<dbReference type="neXtProt" id="NX_P56524"/>
<dbReference type="OpenTargets" id="ENSG00000068024"/>
<dbReference type="Orphanet" id="1001">
    <property type="disease" value="2q37 microdeletion syndrome"/>
</dbReference>
<dbReference type="PharmGKB" id="PA29229"/>
<dbReference type="VEuPathDB" id="HostDB:ENSG00000068024"/>
<dbReference type="eggNOG" id="KOG1343">
    <property type="taxonomic scope" value="Eukaryota"/>
</dbReference>
<dbReference type="GeneTree" id="ENSGT00940000157440"/>
<dbReference type="HOGENOM" id="CLU_006530_2_0_1"/>
<dbReference type="InParanoid" id="P56524"/>
<dbReference type="OrthoDB" id="424012at2759"/>
<dbReference type="PAN-GO" id="P56524">
    <property type="GO annotations" value="6 GO annotations based on evolutionary models"/>
</dbReference>
<dbReference type="PhylomeDB" id="P56524"/>
<dbReference type="TreeFam" id="TF106174"/>
<dbReference type="BRENDA" id="3.5.1.98">
    <property type="organism ID" value="2681"/>
</dbReference>
<dbReference type="PathwayCommons" id="P56524"/>
<dbReference type="Reactome" id="R-HSA-2122947">
    <property type="pathway name" value="NOTCH1 Intracellular Domain Regulates Transcription"/>
</dbReference>
<dbReference type="Reactome" id="R-HSA-2644606">
    <property type="pathway name" value="Constitutive Signaling by NOTCH1 PEST Domain Mutants"/>
</dbReference>
<dbReference type="Reactome" id="R-HSA-2894862">
    <property type="pathway name" value="Constitutive Signaling by NOTCH1 HD+PEST Domain Mutants"/>
</dbReference>
<dbReference type="Reactome" id="R-HSA-350054">
    <property type="pathway name" value="Notch-HLH transcription pathway"/>
</dbReference>
<dbReference type="Reactome" id="R-HSA-4090294">
    <property type="pathway name" value="SUMOylation of intracellular receptors"/>
</dbReference>
<dbReference type="Reactome" id="R-HSA-4551638">
    <property type="pathway name" value="SUMOylation of chromatin organization proteins"/>
</dbReference>
<dbReference type="Reactome" id="R-HSA-8941284">
    <property type="pathway name" value="RUNX2 regulates chondrocyte maturation"/>
</dbReference>
<dbReference type="Reactome" id="R-HSA-8951936">
    <property type="pathway name" value="RUNX3 regulates p14-ARF"/>
</dbReference>
<dbReference type="SignaLink" id="P56524"/>
<dbReference type="SIGNOR" id="P56524"/>
<dbReference type="BioGRID-ORCS" id="9759">
    <property type="hits" value="21 hits in 1170 CRISPR screens"/>
</dbReference>
<dbReference type="ChiTaRS" id="HDAC4">
    <property type="organism name" value="human"/>
</dbReference>
<dbReference type="EvolutionaryTrace" id="P56524"/>
<dbReference type="GeneWiki" id="HDAC4"/>
<dbReference type="GenomeRNAi" id="9759"/>
<dbReference type="Pharos" id="P56524">
    <property type="development level" value="Tclin"/>
</dbReference>
<dbReference type="PRO" id="PR:P56524"/>
<dbReference type="Proteomes" id="UP000005640">
    <property type="component" value="Chromosome 2"/>
</dbReference>
<dbReference type="RNAct" id="P56524">
    <property type="molecule type" value="protein"/>
</dbReference>
<dbReference type="Bgee" id="ENSG00000068024">
    <property type="expression patterns" value="Expressed in sural nerve and 199 other cell types or tissues"/>
</dbReference>
<dbReference type="ExpressionAtlas" id="P56524">
    <property type="expression patterns" value="baseline and differential"/>
</dbReference>
<dbReference type="GO" id="GO:0000785">
    <property type="term" value="C:chromatin"/>
    <property type="evidence" value="ECO:0000314"/>
    <property type="project" value="UniProt"/>
</dbReference>
<dbReference type="GO" id="GO:0005737">
    <property type="term" value="C:cytoplasm"/>
    <property type="evidence" value="ECO:0000314"/>
    <property type="project" value="BHF-UCL"/>
</dbReference>
<dbReference type="GO" id="GO:0005829">
    <property type="term" value="C:cytosol"/>
    <property type="evidence" value="ECO:0000314"/>
    <property type="project" value="HPA"/>
</dbReference>
<dbReference type="GO" id="GO:0000118">
    <property type="term" value="C:histone deacetylase complex"/>
    <property type="evidence" value="ECO:0000314"/>
    <property type="project" value="BHF-UCL"/>
</dbReference>
<dbReference type="GO" id="GO:0016607">
    <property type="term" value="C:nuclear speck"/>
    <property type="evidence" value="ECO:0000314"/>
    <property type="project" value="HPA"/>
</dbReference>
<dbReference type="GO" id="GO:0005654">
    <property type="term" value="C:nucleoplasm"/>
    <property type="evidence" value="ECO:0000314"/>
    <property type="project" value="HPA"/>
</dbReference>
<dbReference type="GO" id="GO:0005634">
    <property type="term" value="C:nucleus"/>
    <property type="evidence" value="ECO:0000314"/>
    <property type="project" value="UniProtKB"/>
</dbReference>
<dbReference type="GO" id="GO:0017053">
    <property type="term" value="C:transcription repressor complex"/>
    <property type="evidence" value="ECO:0000314"/>
    <property type="project" value="BHF-UCL"/>
</dbReference>
<dbReference type="GO" id="GO:0001216">
    <property type="term" value="F:DNA-binding transcription activator activity"/>
    <property type="evidence" value="ECO:0000314"/>
    <property type="project" value="BHF-UCL"/>
</dbReference>
<dbReference type="GO" id="GO:0140297">
    <property type="term" value="F:DNA-binding transcription factor binding"/>
    <property type="evidence" value="ECO:0000353"/>
    <property type="project" value="BHF-UCL"/>
</dbReference>
<dbReference type="GO" id="GO:0004407">
    <property type="term" value="F:histone deacetylase activity"/>
    <property type="evidence" value="ECO:0000314"/>
    <property type="project" value="MGI"/>
</dbReference>
<dbReference type="GO" id="GO:0141221">
    <property type="term" value="F:histone deacetylase activity, hydrolytic mechanism"/>
    <property type="evidence" value="ECO:0007669"/>
    <property type="project" value="UniProtKB-EC"/>
</dbReference>
<dbReference type="GO" id="GO:0042826">
    <property type="term" value="F:histone deacetylase binding"/>
    <property type="evidence" value="ECO:0000353"/>
    <property type="project" value="BHF-UCL"/>
</dbReference>
<dbReference type="GO" id="GO:0042802">
    <property type="term" value="F:identical protein binding"/>
    <property type="evidence" value="ECO:0000353"/>
    <property type="project" value="IntAct"/>
</dbReference>
<dbReference type="GO" id="GO:0060090">
    <property type="term" value="F:molecular adaptor activity"/>
    <property type="evidence" value="ECO:0000314"/>
    <property type="project" value="UniProt"/>
</dbReference>
<dbReference type="GO" id="GO:0030955">
    <property type="term" value="F:potassium ion binding"/>
    <property type="evidence" value="ECO:0000314"/>
    <property type="project" value="BHF-UCL"/>
</dbReference>
<dbReference type="GO" id="GO:0033558">
    <property type="term" value="F:protein lysine deacetylase activity"/>
    <property type="evidence" value="ECO:0000314"/>
    <property type="project" value="BHF-UCL"/>
</dbReference>
<dbReference type="GO" id="GO:0000978">
    <property type="term" value="F:RNA polymerase II cis-regulatory region sequence-specific DNA binding"/>
    <property type="evidence" value="ECO:0000314"/>
    <property type="project" value="UniProtKB"/>
</dbReference>
<dbReference type="GO" id="GO:0061629">
    <property type="term" value="F:RNA polymerase II-specific DNA-binding transcription factor binding"/>
    <property type="evidence" value="ECO:0000353"/>
    <property type="project" value="UniProtKB"/>
</dbReference>
<dbReference type="GO" id="GO:0019789">
    <property type="term" value="F:SUMO transferase activity"/>
    <property type="evidence" value="ECO:0000269"/>
    <property type="project" value="Reactome"/>
</dbReference>
<dbReference type="GO" id="GO:0008270">
    <property type="term" value="F:zinc ion binding"/>
    <property type="evidence" value="ECO:0000314"/>
    <property type="project" value="BHF-UCL"/>
</dbReference>
<dbReference type="GO" id="GO:0042113">
    <property type="term" value="P:B cell activation"/>
    <property type="evidence" value="ECO:0000304"/>
    <property type="project" value="UniProtKB"/>
</dbReference>
<dbReference type="GO" id="GO:0030183">
    <property type="term" value="P:B cell differentiation"/>
    <property type="evidence" value="ECO:0000304"/>
    <property type="project" value="UniProtKB"/>
</dbReference>
<dbReference type="GO" id="GO:0014898">
    <property type="term" value="P:cardiac muscle hypertrophy in response to stress"/>
    <property type="evidence" value="ECO:0000304"/>
    <property type="project" value="BHF-UCL"/>
</dbReference>
<dbReference type="GO" id="GO:0006338">
    <property type="term" value="P:chromatin remodeling"/>
    <property type="evidence" value="ECO:0000314"/>
    <property type="project" value="BHF-UCL"/>
</dbReference>
<dbReference type="GO" id="GO:0040029">
    <property type="term" value="P:epigenetic regulation of gene expression"/>
    <property type="evidence" value="ECO:0000318"/>
    <property type="project" value="GO_Central"/>
</dbReference>
<dbReference type="GO" id="GO:0006954">
    <property type="term" value="P:inflammatory response"/>
    <property type="evidence" value="ECO:0000304"/>
    <property type="project" value="UniProtKB"/>
</dbReference>
<dbReference type="GO" id="GO:0045814">
    <property type="term" value="P:negative regulation of gene expression, epigenetic"/>
    <property type="evidence" value="ECO:0000314"/>
    <property type="project" value="BHF-UCL"/>
</dbReference>
<dbReference type="GO" id="GO:0045820">
    <property type="term" value="P:negative regulation of glycolytic process"/>
    <property type="evidence" value="ECO:0000250"/>
    <property type="project" value="BHF-UCL"/>
</dbReference>
<dbReference type="GO" id="GO:0010832">
    <property type="term" value="P:negative regulation of myotube differentiation"/>
    <property type="evidence" value="ECO:0000315"/>
    <property type="project" value="BHF-UCL"/>
</dbReference>
<dbReference type="GO" id="GO:0010944">
    <property type="term" value="P:negative regulation of transcription by competitive promoter binding"/>
    <property type="evidence" value="ECO:0000315"/>
    <property type="project" value="BHF-UCL"/>
</dbReference>
<dbReference type="GO" id="GO:0000122">
    <property type="term" value="P:negative regulation of transcription by RNA polymerase II"/>
    <property type="evidence" value="ECO:0000314"/>
    <property type="project" value="BHF-UCL"/>
</dbReference>
<dbReference type="GO" id="GO:0007399">
    <property type="term" value="P:nervous system development"/>
    <property type="evidence" value="ECO:0000304"/>
    <property type="project" value="UniProtKB"/>
</dbReference>
<dbReference type="GO" id="GO:0034983">
    <property type="term" value="P:peptidyl-lysine deacetylation"/>
    <property type="evidence" value="ECO:0000314"/>
    <property type="project" value="BHF-UCL"/>
</dbReference>
<dbReference type="GO" id="GO:0008284">
    <property type="term" value="P:positive regulation of cell population proliferation"/>
    <property type="evidence" value="ECO:0000315"/>
    <property type="project" value="BHF-UCL"/>
</dbReference>
<dbReference type="GO" id="GO:0045893">
    <property type="term" value="P:positive regulation of DNA-templated transcription"/>
    <property type="evidence" value="ECO:0000250"/>
    <property type="project" value="BHF-UCL"/>
</dbReference>
<dbReference type="GO" id="GO:0033235">
    <property type="term" value="P:positive regulation of protein sumoylation"/>
    <property type="evidence" value="ECO:0000314"/>
    <property type="project" value="UniProtKB"/>
</dbReference>
<dbReference type="GO" id="GO:0045944">
    <property type="term" value="P:positive regulation of transcription by RNA polymerase II"/>
    <property type="evidence" value="ECO:0000315"/>
    <property type="project" value="BHF-UCL"/>
</dbReference>
<dbReference type="GO" id="GO:0006476">
    <property type="term" value="P:protein deacetylation"/>
    <property type="evidence" value="ECO:0000314"/>
    <property type="project" value="UniProtKB"/>
</dbReference>
<dbReference type="GO" id="GO:0016925">
    <property type="term" value="P:protein sumoylation"/>
    <property type="evidence" value="ECO:0000304"/>
    <property type="project" value="Reactome"/>
</dbReference>
<dbReference type="GO" id="GO:0014894">
    <property type="term" value="P:response to denervation involved in regulation of muscle adaptation"/>
    <property type="evidence" value="ECO:0000250"/>
    <property type="project" value="BHF-UCL"/>
</dbReference>
<dbReference type="GO" id="GO:0070555">
    <property type="term" value="P:response to interleukin-1"/>
    <property type="evidence" value="ECO:0000315"/>
    <property type="project" value="BHF-UCL"/>
</dbReference>
<dbReference type="GO" id="GO:0060337">
    <property type="term" value="P:type I interferon-mediated signaling pathway"/>
    <property type="evidence" value="ECO:0000314"/>
    <property type="project" value="UniProt"/>
</dbReference>
<dbReference type="CDD" id="cd10162">
    <property type="entry name" value="ClassIIa_HDAC4_Gln-rich-N"/>
    <property type="match status" value="1"/>
</dbReference>
<dbReference type="CDD" id="cd10006">
    <property type="entry name" value="HDAC4"/>
    <property type="match status" value="1"/>
</dbReference>
<dbReference type="FunFam" id="3.40.800.20:FF:000002">
    <property type="entry name" value="Histone deacetylase"/>
    <property type="match status" value="1"/>
</dbReference>
<dbReference type="Gene3D" id="6.10.250.1550">
    <property type="match status" value="1"/>
</dbReference>
<dbReference type="Gene3D" id="3.40.800.20">
    <property type="entry name" value="Histone deacetylase domain"/>
    <property type="match status" value="1"/>
</dbReference>
<dbReference type="IDEAL" id="IID00457"/>
<dbReference type="InterPro" id="IPR046949">
    <property type="entry name" value="HDAC4/5/7/9"/>
</dbReference>
<dbReference type="InterPro" id="IPR000286">
    <property type="entry name" value="His_deacetylse"/>
</dbReference>
<dbReference type="InterPro" id="IPR023801">
    <property type="entry name" value="His_deacetylse_dom"/>
</dbReference>
<dbReference type="InterPro" id="IPR037138">
    <property type="entry name" value="His_deacetylse_dom_sf"/>
</dbReference>
<dbReference type="InterPro" id="IPR024643">
    <property type="entry name" value="Hist_deacetylase_Gln_rich_N"/>
</dbReference>
<dbReference type="InterPro" id="IPR023696">
    <property type="entry name" value="Ureohydrolase_dom_sf"/>
</dbReference>
<dbReference type="PANTHER" id="PTHR45364:SF13">
    <property type="entry name" value="HISTONE DEACETYLASE"/>
    <property type="match status" value="1"/>
</dbReference>
<dbReference type="PANTHER" id="PTHR45364">
    <property type="entry name" value="HISTONE DEACETYLASE 9-RELATED"/>
    <property type="match status" value="1"/>
</dbReference>
<dbReference type="Pfam" id="PF12203">
    <property type="entry name" value="HDAC4_Gln"/>
    <property type="match status" value="1"/>
</dbReference>
<dbReference type="Pfam" id="PF00850">
    <property type="entry name" value="Hist_deacetyl"/>
    <property type="match status" value="1"/>
</dbReference>
<dbReference type="PIRSF" id="PIRSF037911">
    <property type="entry name" value="HDAC_II_euk"/>
    <property type="match status" value="1"/>
</dbReference>
<dbReference type="PRINTS" id="PR01270">
    <property type="entry name" value="HDASUPER"/>
</dbReference>
<dbReference type="SUPFAM" id="SSF52768">
    <property type="entry name" value="Arginase/deacetylase"/>
    <property type="match status" value="1"/>
</dbReference>
<evidence type="ECO:0000250" key="1"/>
<evidence type="ECO:0000250" key="2">
    <source>
        <dbReference type="UniProtKB" id="Q6NZM9"/>
    </source>
</evidence>
<evidence type="ECO:0000250" key="3">
    <source>
        <dbReference type="UniProtKB" id="Q99P99"/>
    </source>
</evidence>
<evidence type="ECO:0000255" key="4"/>
<evidence type="ECO:0000256" key="5">
    <source>
        <dbReference type="SAM" id="MobiDB-lite"/>
    </source>
</evidence>
<evidence type="ECO:0000269" key="6">
    <source>
    </source>
</evidence>
<evidence type="ECO:0000269" key="7">
    <source>
    </source>
</evidence>
<evidence type="ECO:0000269" key="8">
    <source>
    </source>
</evidence>
<evidence type="ECO:0000269" key="9">
    <source>
    </source>
</evidence>
<evidence type="ECO:0000269" key="10">
    <source>
    </source>
</evidence>
<evidence type="ECO:0000269" key="11">
    <source>
    </source>
</evidence>
<evidence type="ECO:0000269" key="12">
    <source>
    </source>
</evidence>
<evidence type="ECO:0000269" key="13">
    <source>
    </source>
</evidence>
<evidence type="ECO:0000269" key="14">
    <source>
    </source>
</evidence>
<evidence type="ECO:0000269" key="15">
    <source>
    </source>
</evidence>
<evidence type="ECO:0000269" key="16">
    <source>
    </source>
</evidence>
<evidence type="ECO:0000269" key="17">
    <source>
    </source>
</evidence>
<evidence type="ECO:0000269" key="18">
    <source>
    </source>
</evidence>
<evidence type="ECO:0000269" key="19">
    <source>
    </source>
</evidence>
<evidence type="ECO:0000269" key="20">
    <source>
    </source>
</evidence>
<evidence type="ECO:0000269" key="21">
    <source>
    </source>
</evidence>
<evidence type="ECO:0000269" key="22">
    <source>
    </source>
</evidence>
<evidence type="ECO:0000269" key="23">
    <source>
    </source>
</evidence>
<evidence type="ECO:0000269" key="24">
    <source>
    </source>
</evidence>
<evidence type="ECO:0000269" key="25">
    <source>
    </source>
</evidence>
<evidence type="ECO:0000269" key="26">
    <source>
    </source>
</evidence>
<evidence type="ECO:0000303" key="27">
    <source>
    </source>
</evidence>
<evidence type="ECO:0000305" key="28"/>
<evidence type="ECO:0000305" key="29">
    <source>
    </source>
</evidence>
<evidence type="ECO:0000312" key="30">
    <source>
        <dbReference type="HGNC" id="HGNC:14063"/>
    </source>
</evidence>
<evidence type="ECO:0007744" key="31">
    <source>
    </source>
</evidence>
<evidence type="ECO:0007744" key="32">
    <source>
    </source>
</evidence>
<evidence type="ECO:0007744" key="33">
    <source>
    </source>
</evidence>
<evidence type="ECO:0007744" key="34">
    <source>
    </source>
</evidence>
<evidence type="ECO:0007829" key="35">
    <source>
        <dbReference type="PDB" id="2H8N"/>
    </source>
</evidence>
<evidence type="ECO:0007829" key="36">
    <source>
        <dbReference type="PDB" id="2VQM"/>
    </source>
</evidence>
<evidence type="ECO:0007829" key="37">
    <source>
        <dbReference type="PDB" id="3UXG"/>
    </source>
</evidence>
<evidence type="ECO:0007829" key="38">
    <source>
        <dbReference type="PDB" id="5ZOO"/>
    </source>
</evidence>
<evidence type="ECO:0007829" key="39">
    <source>
        <dbReference type="PDB" id="6FYZ"/>
    </source>
</evidence>
<reference key="1">
    <citation type="journal article" date="1999" name="Proc. Natl. Acad. Sci. U.S.A.">
        <title>Three proteins define a class of human histone deacetylases related to yeast Hda1p.</title>
        <authorList>
            <person name="Grozinger C.M."/>
            <person name="Hassig C.A."/>
            <person name="Schreiber S.L."/>
        </authorList>
    </citation>
    <scope>NUCLEOTIDE SEQUENCE [MRNA] (ISOFORM 1)</scope>
    <scope>CATALYTIC ACTIVITY</scope>
    <source>
        <tissue>Leukemia</tissue>
    </source>
</reference>
<reference key="2">
    <citation type="journal article" date="1997" name="DNA Res.">
        <title>Construction and characterization of human brain cDNA libraries suitable for analysis of cDNA clones encoding relatively large proteins.</title>
        <authorList>
            <person name="Ohara O."/>
            <person name="Nagase T."/>
            <person name="Ishikawa K."/>
            <person name="Nakajima D."/>
            <person name="Ohira M."/>
            <person name="Seki N."/>
            <person name="Nomura N."/>
        </authorList>
    </citation>
    <scope>NUCLEOTIDE SEQUENCE [LARGE SCALE MRNA] (ISOFORM 1)</scope>
    <source>
        <tissue>Brain</tissue>
    </source>
</reference>
<reference key="3">
    <citation type="submission" date="1999-12" db="EMBL/GenBank/DDBJ databases">
        <authorList>
            <person name="Ohara O."/>
            <person name="Nagase T."/>
            <person name="Ishikawa K."/>
            <person name="Nakajima D."/>
            <person name="Ohira M."/>
            <person name="Seki N."/>
            <person name="Nomura N."/>
        </authorList>
    </citation>
    <scope>SEQUENCE REVISION TO N-TERMINUS</scope>
</reference>
<reference key="4">
    <citation type="journal article" date="2005" name="Nature">
        <title>Generation and annotation of the DNA sequences of human chromosomes 2 and 4.</title>
        <authorList>
            <person name="Hillier L.W."/>
            <person name="Graves T.A."/>
            <person name="Fulton R.S."/>
            <person name="Fulton L.A."/>
            <person name="Pepin K.H."/>
            <person name="Minx P."/>
            <person name="Wagner-McPherson C."/>
            <person name="Layman D."/>
            <person name="Wylie K."/>
            <person name="Sekhon M."/>
            <person name="Becker M.C."/>
            <person name="Fewell G.A."/>
            <person name="Delehaunty K.D."/>
            <person name="Miner T.L."/>
            <person name="Nash W.E."/>
            <person name="Kremitzki C."/>
            <person name="Oddy L."/>
            <person name="Du H."/>
            <person name="Sun H."/>
            <person name="Bradshaw-Cordum H."/>
            <person name="Ali J."/>
            <person name="Carter J."/>
            <person name="Cordes M."/>
            <person name="Harris A."/>
            <person name="Isak A."/>
            <person name="van Brunt A."/>
            <person name="Nguyen C."/>
            <person name="Du F."/>
            <person name="Courtney L."/>
            <person name="Kalicki J."/>
            <person name="Ozersky P."/>
            <person name="Abbott S."/>
            <person name="Armstrong J."/>
            <person name="Belter E.A."/>
            <person name="Caruso L."/>
            <person name="Cedroni M."/>
            <person name="Cotton M."/>
            <person name="Davidson T."/>
            <person name="Desai A."/>
            <person name="Elliott G."/>
            <person name="Erb T."/>
            <person name="Fronick C."/>
            <person name="Gaige T."/>
            <person name="Haakenson W."/>
            <person name="Haglund K."/>
            <person name="Holmes A."/>
            <person name="Harkins R."/>
            <person name="Kim K."/>
            <person name="Kruchowski S.S."/>
            <person name="Strong C.M."/>
            <person name="Grewal N."/>
            <person name="Goyea E."/>
            <person name="Hou S."/>
            <person name="Levy A."/>
            <person name="Martinka S."/>
            <person name="Mead K."/>
            <person name="McLellan M.D."/>
            <person name="Meyer R."/>
            <person name="Randall-Maher J."/>
            <person name="Tomlinson C."/>
            <person name="Dauphin-Kohlberg S."/>
            <person name="Kozlowicz-Reilly A."/>
            <person name="Shah N."/>
            <person name="Swearengen-Shahid S."/>
            <person name="Snider J."/>
            <person name="Strong J.T."/>
            <person name="Thompson J."/>
            <person name="Yoakum M."/>
            <person name="Leonard S."/>
            <person name="Pearman C."/>
            <person name="Trani L."/>
            <person name="Radionenko M."/>
            <person name="Waligorski J.E."/>
            <person name="Wang C."/>
            <person name="Rock S.M."/>
            <person name="Tin-Wollam A.-M."/>
            <person name="Maupin R."/>
            <person name="Latreille P."/>
            <person name="Wendl M.C."/>
            <person name="Yang S.-P."/>
            <person name="Pohl C."/>
            <person name="Wallis J.W."/>
            <person name="Spieth J."/>
            <person name="Bieri T.A."/>
            <person name="Berkowicz N."/>
            <person name="Nelson J.O."/>
            <person name="Osborne J."/>
            <person name="Ding L."/>
            <person name="Meyer R."/>
            <person name="Sabo A."/>
            <person name="Shotland Y."/>
            <person name="Sinha P."/>
            <person name="Wohldmann P.E."/>
            <person name="Cook L.L."/>
            <person name="Hickenbotham M.T."/>
            <person name="Eldred J."/>
            <person name="Williams D."/>
            <person name="Jones T.A."/>
            <person name="She X."/>
            <person name="Ciccarelli F.D."/>
            <person name="Izaurralde E."/>
            <person name="Taylor J."/>
            <person name="Schmutz J."/>
            <person name="Myers R.M."/>
            <person name="Cox D.R."/>
            <person name="Huang X."/>
            <person name="McPherson J.D."/>
            <person name="Mardis E.R."/>
            <person name="Clifton S.W."/>
            <person name="Warren W.C."/>
            <person name="Chinwalla A.T."/>
            <person name="Eddy S.R."/>
            <person name="Marra M.A."/>
            <person name="Ovcharenko I."/>
            <person name="Furey T.S."/>
            <person name="Miller W."/>
            <person name="Eichler E.E."/>
            <person name="Bork P."/>
            <person name="Suyama M."/>
            <person name="Torrents D."/>
            <person name="Waterston R.H."/>
            <person name="Wilson R.K."/>
        </authorList>
    </citation>
    <scope>NUCLEOTIDE SEQUENCE [LARGE SCALE GENOMIC DNA]</scope>
</reference>
<reference key="5">
    <citation type="submission" date="2005-09" db="EMBL/GenBank/DDBJ databases">
        <authorList>
            <person name="Mural R.J."/>
            <person name="Istrail S."/>
            <person name="Sutton G."/>
            <person name="Florea L."/>
            <person name="Halpern A.L."/>
            <person name="Mobarry C.M."/>
            <person name="Lippert R."/>
            <person name="Walenz B."/>
            <person name="Shatkay H."/>
            <person name="Dew I."/>
            <person name="Miller J.R."/>
            <person name="Flanigan M.J."/>
            <person name="Edwards N.J."/>
            <person name="Bolanos R."/>
            <person name="Fasulo D."/>
            <person name="Halldorsson B.V."/>
            <person name="Hannenhalli S."/>
            <person name="Turner R."/>
            <person name="Yooseph S."/>
            <person name="Lu F."/>
            <person name="Nusskern D.R."/>
            <person name="Shue B.C."/>
            <person name="Zheng X.H."/>
            <person name="Zhong F."/>
            <person name="Delcher A.L."/>
            <person name="Huson D.H."/>
            <person name="Kravitz S.A."/>
            <person name="Mouchard L."/>
            <person name="Reinert K."/>
            <person name="Remington K.A."/>
            <person name="Clark A.G."/>
            <person name="Waterman M.S."/>
            <person name="Eichler E.E."/>
            <person name="Adams M.D."/>
            <person name="Hunkapiller M.W."/>
            <person name="Myers E.W."/>
            <person name="Venter J.C."/>
        </authorList>
    </citation>
    <scope>NUCLEOTIDE SEQUENCE [LARGE SCALE GENOMIC DNA]</scope>
</reference>
<reference key="6">
    <citation type="journal article" date="2004" name="Genome Res.">
        <title>The status, quality, and expansion of the NIH full-length cDNA project: the Mammalian Gene Collection (MGC).</title>
        <authorList>
            <consortium name="The MGC Project Team"/>
        </authorList>
    </citation>
    <scope>NUCLEOTIDE SEQUENCE [LARGE SCALE MRNA] (ISOFORM 2)</scope>
    <source>
        <tissue>Testis</tissue>
    </source>
</reference>
<reference key="7">
    <citation type="journal article" date="1999" name="EMBO J.">
        <title>HDAC4 deacetylase associates with and represses the MEF2 transcription factor.</title>
        <authorList>
            <person name="Miska E.A."/>
            <person name="Karlsson C."/>
            <person name="Langley E."/>
            <person name="Nielsen S.J."/>
            <person name="Pines J."/>
            <person name="Kouzarides T."/>
        </authorList>
    </citation>
    <scope>SUBCELLULAR LOCATION</scope>
    <scope>INTERACTION WITH MEF2A</scope>
</reference>
<reference key="8">
    <citation type="journal article" date="1999" name="Mol. Cell. Biol.">
        <title>HDAC4, a human histone deacetylase related to yeast HDA1, is a transcriptional corepressor.</title>
        <authorList>
            <person name="Wang A.H."/>
            <person name="Bertos N.R."/>
            <person name="Vezmar M."/>
            <person name="Pelletier N."/>
            <person name="Crosato M."/>
            <person name="Heng H.H."/>
            <person name="Th'ng J."/>
            <person name="Han J."/>
            <person name="Yang X.-J."/>
        </authorList>
    </citation>
    <scope>FUNCTION</scope>
    <scope>CATALYTIC ACTIVITY</scope>
    <scope>INTERACTION WITH MEF2C AND MEF2D</scope>
    <scope>MUTAGENESIS OF HIS-803</scope>
</reference>
<reference key="9">
    <citation type="journal article" date="2000" name="Mol. Cell. Biol.">
        <title>Regulation of histone deacetylase 4 by binding of 14-3-3 proteins.</title>
        <authorList>
            <person name="Wang A.H."/>
            <person name="Kruhlak M.J."/>
            <person name="Wu J."/>
            <person name="Bertos N.R."/>
            <person name="Vezmar M."/>
            <person name="Posner B.I."/>
            <person name="Bazett-Jones D.P."/>
            <person name="Yang X.-J."/>
        </authorList>
    </citation>
    <scope>PHOSPHORYLATION AT SER-246; SER-467 AND SER-632</scope>
    <scope>MUTAGENESIS OF SER-246; SER-467 AND SER-632</scope>
    <scope>INTERACTION WITH 14-3-3 PROTEINS</scope>
</reference>
<reference key="10">
    <citation type="journal article" date="2001" name="J. Biol. Chem.">
        <title>The modular nature of histone deacetylase HDAC4 confers phosphorylation-dependent intracellular trafficking.</title>
        <authorList>
            <person name="Zhao X."/>
            <person name="Ito A."/>
            <person name="Kane C.D."/>
            <person name="Liao T.-S."/>
            <person name="Bolger T.A."/>
            <person name="Lemrow S.M."/>
            <person name="Means A.R."/>
            <person name="Yao T.-P."/>
        </authorList>
    </citation>
    <scope>SUBCELLULAR LOCATION</scope>
    <scope>PHOSPHORYLATION</scope>
    <scope>MUTAGENESIS OF SER-467 AND SER-632</scope>
</reference>
<reference key="11">
    <citation type="journal article" date="2001" name="Mol. Cell. Biol.">
        <title>Identification of a signal-responsive nuclear export sequence in class II histone deacetylases.</title>
        <authorList>
            <person name="McKinsey T.A."/>
            <person name="Zhang C.-L."/>
            <person name="Olson E.N."/>
        </authorList>
    </citation>
    <scope>NUCLEAR EXPORT SIGNAL</scope>
    <scope>MUTAGENESIS OF VAL-1056 AND LEU-1062</scope>
</reference>
<reference key="12">
    <citation type="journal article" date="2001" name="Mol. Endocrinol.">
        <title>The orphan nuclear receptor TR2 interacts directly with both class I and class II histone deacetylases.</title>
        <authorList>
            <person name="Franco P.J."/>
            <person name="Farooqui M."/>
            <person name="Seto E."/>
            <person name="Wei L.-N."/>
        </authorList>
    </citation>
    <scope>INTERACTION WITH NR2C1</scope>
</reference>
<reference key="13">
    <citation type="journal article" date="2002" name="EMBO J.">
        <title>The SUMO E3 ligase RanBP2 promotes modification of the HDAC4 deacetylase.</title>
        <authorList>
            <person name="Kirsh O."/>
            <person name="Seeler J.-S."/>
            <person name="Pichler A."/>
            <person name="Gast A."/>
            <person name="Mueller S."/>
            <person name="Miska E."/>
            <person name="Mathieu M."/>
            <person name="Harel-Bellan A."/>
            <person name="Kouzarides T."/>
            <person name="Melchior F."/>
            <person name="Dejean A."/>
        </authorList>
    </citation>
    <scope>CATALYTIC ACTIVITY</scope>
    <scope>HOMODIMERIZATION</scope>
    <scope>SUMOYLATION AT LYS-559</scope>
    <scope>MUTAGENESIS OF LYS-559</scope>
</reference>
<reference key="14">
    <citation type="journal article" date="2007" name="Int. J. Cancer">
        <title>Breast cancer associated transcriptional repressor PLU-1/JARID1B interacts directly with histone deacetylases.</title>
        <authorList>
            <person name="Barrett A."/>
            <person name="Santangelo S."/>
            <person name="Tan K."/>
            <person name="Catchpole S."/>
            <person name="Roberts K."/>
            <person name="Spencer-Dene B."/>
            <person name="Hall D."/>
            <person name="Scibetta A."/>
            <person name="Burchell J."/>
            <person name="Verdin E."/>
            <person name="Freemont P."/>
            <person name="Taylor-Papadimitriou J."/>
        </authorList>
    </citation>
    <scope>INTERACTION WITH KDM5B</scope>
</reference>
<reference key="15">
    <citation type="journal article" date="2007" name="J. Biol. Chem.">
        <title>Nuclear calcium/calmodulin-dependent protein kinase IIdelta preferentially transmits signals to histone deacetylase 4 in cardiac cells.</title>
        <authorList>
            <person name="Little G.H."/>
            <person name="Bai Y."/>
            <person name="Williams T."/>
            <person name="Poizat C."/>
        </authorList>
    </citation>
    <scope>PHOSPHORYLATION BY CAMK2D</scope>
</reference>
<reference key="16">
    <citation type="journal article" date="2008" name="Proc. Natl. Acad. Sci. U.S.A.">
        <title>A quantitative atlas of mitotic phosphorylation.</title>
        <authorList>
            <person name="Dephoure N."/>
            <person name="Zhou C."/>
            <person name="Villen J."/>
            <person name="Beausoleil S.A."/>
            <person name="Bakalarski C.E."/>
            <person name="Elledge S.J."/>
            <person name="Gygi S.P."/>
        </authorList>
    </citation>
    <scope>PHOSPHORYLATION [LARGE SCALE ANALYSIS] AT SER-632 AND SER-633</scope>
    <scope>IDENTIFICATION BY MASS SPECTROMETRY [LARGE SCALE ANALYSIS]</scope>
    <source>
        <tissue>Cervix carcinoma</tissue>
    </source>
</reference>
<reference key="17">
    <citation type="journal article" date="2009" name="Sci. Signal.">
        <title>Quantitative phosphoproteomic analysis of T cell receptor signaling reveals system-wide modulation of protein-protein interactions.</title>
        <authorList>
            <person name="Mayya V."/>
            <person name="Lundgren D.H."/>
            <person name="Hwang S.-I."/>
            <person name="Rezaul K."/>
            <person name="Wu L."/>
            <person name="Eng J.K."/>
            <person name="Rodionov V."/>
            <person name="Han D.K."/>
        </authorList>
    </citation>
    <scope>PHOSPHORYLATION [LARGE SCALE ANALYSIS] AT SER-350</scope>
    <scope>IDENTIFICATION BY MASS SPECTROMETRY [LARGE SCALE ANALYSIS]</scope>
    <source>
        <tissue>Leukemic T-cell</tissue>
    </source>
</reference>
<reference key="18">
    <citation type="journal article" date="2010" name="Am. J. Hum. Genet.">
        <title>Haploinsufficiency of HDAC4 causes brachydactyly mental retardation syndrome, with brachydactyly type E, developmental delays, and behavioral problems.</title>
        <authorList>
            <person name="Williams S.R."/>
            <person name="Aldred M.A."/>
            <person name="Der Kaloustian V.M."/>
            <person name="Halal F."/>
            <person name="Gowans G."/>
            <person name="McLeod D.R."/>
            <person name="Zondag S."/>
            <person name="Toriello H.V."/>
            <person name="Magenis R.E."/>
            <person name="Elsea S.H."/>
        </authorList>
    </citation>
    <scope>INVOLVEMENT IN BDMR</scope>
</reference>
<reference key="19">
    <citation type="journal article" date="2010" name="Nucleic Acids Res.">
        <title>Involvement of histone deacetylation in MORC2-mediated down-regulation of carbonic anhydrase IX.</title>
        <authorList>
            <person name="Shao Y."/>
            <person name="Li Y."/>
            <person name="Zhang J."/>
            <person name="Liu D."/>
            <person name="Liu F."/>
            <person name="Zhao Y."/>
            <person name="Shen T."/>
            <person name="Li F."/>
        </authorList>
    </citation>
    <scope>INTERACTION WITH MORC2</scope>
</reference>
<reference key="20">
    <citation type="journal article" date="2010" name="Sci. Signal.">
        <title>Quantitative phosphoproteomics reveals widespread full phosphorylation site occupancy during mitosis.</title>
        <authorList>
            <person name="Olsen J.V."/>
            <person name="Vermeulen M."/>
            <person name="Santamaria A."/>
            <person name="Kumar C."/>
            <person name="Miller M.L."/>
            <person name="Jensen L.J."/>
            <person name="Gnad F."/>
            <person name="Cox J."/>
            <person name="Jensen T.S."/>
            <person name="Nigg E.A."/>
            <person name="Brunak S."/>
            <person name="Mann M."/>
        </authorList>
    </citation>
    <scope>IDENTIFICATION BY MASS SPECTROMETRY [LARGE SCALE ANALYSIS]</scope>
    <source>
        <tissue>Cervix carcinoma</tissue>
    </source>
</reference>
<reference key="21">
    <citation type="journal article" date="2011" name="Sci. Signal.">
        <title>System-wide temporal characterization of the proteome and phosphoproteome of human embryonic stem cell differentiation.</title>
        <authorList>
            <person name="Rigbolt K.T."/>
            <person name="Prokhorova T.A."/>
            <person name="Akimov V."/>
            <person name="Henningsen J."/>
            <person name="Johansen P.T."/>
            <person name="Kratchmarova I."/>
            <person name="Kassem M."/>
            <person name="Mann M."/>
            <person name="Olsen J.V."/>
            <person name="Blagoev B."/>
        </authorList>
    </citation>
    <scope>IDENTIFICATION BY MASS SPECTROMETRY [LARGE SCALE ANALYSIS]</scope>
</reference>
<reference key="22">
    <citation type="journal article" date="2013" name="Eur. J. Hum. Genet.">
        <title>Phenotypic variant of Brachydactyly-mental retardation syndrome in a family with an inherited interstitial 2q37.3 microdeletion including HDAC4.</title>
        <authorList>
            <person name="Villavicencio-Lorini P."/>
            <person name="Klopocki E."/>
            <person name="Trimborn M."/>
            <person name="Koll R."/>
            <person name="Mundlos S."/>
            <person name="Horn D."/>
        </authorList>
    </citation>
    <scope>INVOLVEMENT IN BDMR</scope>
</reference>
<reference key="23">
    <citation type="journal article" date="2013" name="J. Proteome Res.">
        <title>Toward a comprehensive characterization of a human cancer cell phosphoproteome.</title>
        <authorList>
            <person name="Zhou H."/>
            <person name="Di Palma S."/>
            <person name="Preisinger C."/>
            <person name="Peng M."/>
            <person name="Polat A.N."/>
            <person name="Heck A.J."/>
            <person name="Mohammed S."/>
        </authorList>
    </citation>
    <scope>PHOSPHORYLATION [LARGE SCALE ANALYSIS] AT SER-632</scope>
    <scope>IDENTIFICATION BY MASS SPECTROMETRY [LARGE SCALE ANALYSIS]</scope>
    <source>
        <tissue>Cervix carcinoma</tissue>
        <tissue>Erythroleukemia</tissue>
    </source>
</reference>
<reference key="24">
    <citation type="journal article" date="2014" name="Cancer Res.">
        <title>Differential regulation of estrogen receptor alpha expression in breast cancer cells by metastasis-associated protein 1.</title>
        <authorList>
            <person name="Kang H.J."/>
            <person name="Lee M.H."/>
            <person name="Kang H.L."/>
            <person name="Kim S.H."/>
            <person name="Ahn J.R."/>
            <person name="Na H."/>
            <person name="Na T.Y."/>
            <person name="Kim Y.N."/>
            <person name="Seong J.K."/>
            <person name="Lee M.O."/>
        </authorList>
    </citation>
    <scope>FUNCTION</scope>
    <scope>INTERACTION WITH EP300</scope>
</reference>
<reference key="25">
    <citation type="journal article" date="2014" name="Am. J. Med. Genet. A">
        <title>Haploinsufficiency of HDAC4 does not cause intellectual disability in all affected individuals.</title>
        <authorList>
            <person name="Wheeler P.G."/>
            <person name="Huang D."/>
            <person name="Dai Z."/>
        </authorList>
    </citation>
    <scope>INVOLVEMENT IN BDMR</scope>
</reference>
<reference key="26">
    <citation type="journal article" date="2014" name="J. Proteomics">
        <title>An enzyme assisted RP-RPLC approach for in-depth analysis of human liver phosphoproteome.</title>
        <authorList>
            <person name="Bian Y."/>
            <person name="Song C."/>
            <person name="Cheng K."/>
            <person name="Dong M."/>
            <person name="Wang F."/>
            <person name="Huang J."/>
            <person name="Sun D."/>
            <person name="Wang L."/>
            <person name="Ye M."/>
            <person name="Zou H."/>
        </authorList>
    </citation>
    <scope>PHOSPHORYLATION [LARGE SCALE ANALYSIS] AT SER-632</scope>
    <scope>IDENTIFICATION BY MASS SPECTROMETRY [LARGE SCALE ANALYSIS]</scope>
    <source>
        <tissue>Liver</tissue>
    </source>
</reference>
<reference key="27">
    <citation type="journal article" date="2015" name="Structure">
        <title>Ankyrin repeats of ANKRA2 recognize a PxLPxL motif on the 3M syndrome protein CCDC8.</title>
        <authorList>
            <person name="Nie J."/>
            <person name="Xu C."/>
            <person name="Jin J."/>
            <person name="Aka J.A."/>
            <person name="Tempel W."/>
            <person name="Nguyen V."/>
            <person name="You L."/>
            <person name="Weist R."/>
            <person name="Min J."/>
            <person name="Pawson T."/>
            <person name="Yang X.J."/>
        </authorList>
    </citation>
    <scope>INTERACTION WITH CUL7 AND ANKRA2</scope>
    <scope>MUTAGENESIS OF PRO-349 AND ILE-354</scope>
</reference>
<reference key="28">
    <citation type="journal article" date="2016" name="Nat. Commun.">
        <title>ARD1-mediated Hsp70 acetylation balances stress-induced protein refolding and degradation.</title>
        <authorList>
            <person name="Seo J.H."/>
            <person name="Park J.H."/>
            <person name="Lee E.J."/>
            <person name="Vo T.T."/>
            <person name="Choi H."/>
            <person name="Kim J.Y."/>
            <person name="Jang J.K."/>
            <person name="Wee H.J."/>
            <person name="Lee H.S."/>
            <person name="Jang S.H."/>
            <person name="Park Z.Y."/>
            <person name="Jeong J."/>
            <person name="Lee K.J."/>
            <person name="Seok S.H."/>
            <person name="Park J.Y."/>
            <person name="Lee B.J."/>
            <person name="Lee M.N."/>
            <person name="Oh G.T."/>
            <person name="Kim K.W."/>
        </authorList>
    </citation>
    <scope>FUNCTION</scope>
    <scope>INTERACTION WITH HSPA1A AND HSPA1B</scope>
</reference>
<reference key="29">
    <citation type="journal article" date="2018" name="Nature">
        <title>NP220 mediates silencing of unintegrated retroviral DNA.</title>
        <authorList>
            <person name="Zhu Y."/>
            <person name="Wang G.Z."/>
            <person name="Cingoez O."/>
            <person name="Goff S.P."/>
        </authorList>
    </citation>
    <scope>INTERACTION WITH ZNF638</scope>
</reference>
<reference key="30">
    <citation type="journal article" date="2012" name="Sci. Signal.">
        <title>Sequence-specific recognition of a PxLPxI/L motif by an ankyrin repeat tumbler lock.</title>
        <authorList>
            <person name="Xu C."/>
            <person name="Jin J."/>
            <person name="Bian C."/>
            <person name="Lam R."/>
            <person name="Tian R."/>
            <person name="Weist R."/>
            <person name="You L."/>
            <person name="Nie J."/>
            <person name="Bochkarev A."/>
            <person name="Tempel W."/>
            <person name="Tan C.S."/>
            <person name="Wasney G.A."/>
            <person name="Vedadi M."/>
            <person name="Gish G.D."/>
            <person name="Arrowsmith C.H."/>
            <person name="Pawson T."/>
            <person name="Yang X.J."/>
            <person name="Min J."/>
        </authorList>
    </citation>
    <scope>X-RAY CRYSTALLOGRAPHY (1.57 ANGSTROMS) OF 343-359 IN COMPLEX WITH ANKRA2</scope>
    <scope>PHOSPHORYLATION AT SER-350</scope>
    <scope>MOTIF</scope>
    <scope>MUTAGENESIS OF LEU-345; TYR-346; THR-347; SER-348; PRO-349; SER-350; LEU-351; PRO-352; ASN-353; ILE-354; THR-355 AND LEU-356</scope>
</reference>
<reference key="31">
    <citation type="journal article" date="2006" name="Science">
        <title>The consensus coding sequences of human breast and colorectal cancers.</title>
        <authorList>
            <person name="Sjoeblom T."/>
            <person name="Jones S."/>
            <person name="Wood L.D."/>
            <person name="Parsons D.W."/>
            <person name="Lin J."/>
            <person name="Barber T.D."/>
            <person name="Mandelker D."/>
            <person name="Leary R.J."/>
            <person name="Ptak J."/>
            <person name="Silliman N."/>
            <person name="Szabo S."/>
            <person name="Buckhaults P."/>
            <person name="Farrell C."/>
            <person name="Meeh P."/>
            <person name="Markowitz S.D."/>
            <person name="Willis J."/>
            <person name="Dawson D."/>
            <person name="Willson J.K.V."/>
            <person name="Gazdar A.F."/>
            <person name="Hartigan J."/>
            <person name="Wu L."/>
            <person name="Liu C."/>
            <person name="Parmigiani G."/>
            <person name="Park B.H."/>
            <person name="Bachman K.E."/>
            <person name="Papadopoulos N."/>
            <person name="Vogelstein B."/>
            <person name="Kinzler K.W."/>
            <person name="Velculescu V.E."/>
        </authorList>
    </citation>
    <scope>VARIANT [LARGE SCALE ANALYSIS] ARG-727</scope>
</reference>
<reference key="32">
    <citation type="journal article" date="2014" name="Eur. J. Hum. Genet.">
        <title>20 ans apres: a second mutation in MAOA identified by targeted high-throughput sequencing in a family with altered behavior and cognition.</title>
        <authorList>
            <person name="Piton A."/>
            <person name="Poquet H."/>
            <person name="Redin C."/>
            <person name="Masurel A."/>
            <person name="Lauer J."/>
            <person name="Muller J."/>
            <person name="Thevenon J."/>
            <person name="Herenger Y."/>
            <person name="Chancenotte S."/>
            <person name="Bonnet M."/>
            <person name="Pinoit J.M."/>
            <person name="Huet F."/>
            <person name="Thauvin-Robinet C."/>
            <person name="Jaeger A.S."/>
            <person name="Le Gras S."/>
            <person name="Jost B."/>
            <person name="Gerard B."/>
            <person name="Peoc'h K."/>
            <person name="Launay J.M."/>
            <person name="Faivre L."/>
            <person name="Mandel J.L."/>
        </authorList>
    </citation>
    <scope>VARIANT ILE-754</scope>
</reference>
<reference key="33">
    <citation type="journal article" date="2021" name="HGG Adv.">
        <title>Missense substitutions at a conserved 14-3-3 binding site in HDAC4 cause a novel intellectual disability syndrome.</title>
        <authorList>
            <consortium name="DDD Study"/>
            <person name="Wakeling E."/>
            <person name="McEntagart M."/>
            <person name="Bruccoleri M."/>
            <person name="Shaw-Smith C."/>
            <person name="Stals K.L."/>
            <person name="Wakeling M."/>
            <person name="Barnicoat A."/>
            <person name="Beesley C."/>
            <person name="Hanson-Kahn A.K."/>
            <person name="Kukolich M."/>
            <person name="Stevenson D.A."/>
            <person name="Campeau P.M."/>
            <person name="Ellard S."/>
            <person name="Elsea S.H."/>
            <person name="Yang X.J."/>
            <person name="Caswell R.C."/>
        </authorList>
    </citation>
    <scope>VARIANTS NEDCHF LYS-244; GLY-247; ALA-248 AND LEU-248</scope>
    <scope>INVOLVEMENT IN NEDCHF</scope>
    <scope>CHARACTERIZATION OF VARIANTS NEDCHF LYS-244 AND GLY-247</scope>
    <scope>INTERACTION WITH YWHAB</scope>
</reference>
<accession>P56524</accession>
<accession>E9PGB9</accession>
<accession>F5GX36</accession>
<accession>Q86YH7</accession>
<accession>Q9UND6</accession>
<gene>
    <name evidence="30" type="primary">HDAC4</name>
    <name type="synonym">KIAA0288</name>
</gene>
<sequence length="1084" mass="119040">MSSQSHPDGLSGRDQPVELLNPARVNHMPSTVDVATALPLQVAPSAVPMDLRLDHQFSLPVAEPALREQQLQQELLALKQKQQIQRQILIAEFQRQHEQLSRQHEAQLHEHIKQQQEMLAMKHQQELLEHQRKLERHRQEQELEKQHREQKLQQLKNKEKGKESAVASTEVKMKLQEFVLNKKKALAHRNLNHCISSDPRYWYGKTQHSSLDQSSPPQSGVSTSYNHPVLGMYDAKDDFPLRKTASEPNLKLRSRLKQKVAERRSSPLLRRKDGPVVTALKKRPLDVTDSACSSAPGSGPSSPNNSSGSVSAENGIAPAVPSIPAETSLAHRLVAREGSAAPLPLYTSPSLPNITLGLPATGPSAGTAGQQDAERLTLPALQQRLSLFPGTHLTPYLSTSPLERDGGAAHSPLLQHMVLLEQPPAQAPLVTGLGALPLHAQSLVGADRVSPSIHKLRQHRPLGRTQSAPLPQNAQALQHLVIQQQHQQFLEKHKQQFQQQQLQMNKIIPKPSEPARQPESHPEETEEELREHQALLDEPYLDRLPGQKEAHAQAGVQVKQEPIESDEEEAEPPREVEPGQRQPSEQELLFRQQALLLEQQRIHQLRNYQASMEAAGIPVSFGGHRPLSRAQSSPASATFPVSVQEPPTKPRFTTGLVYDTLMLKHQCTCGSSSSHPEHAGRIQSIWSRLQETGLRGKCECIRGRKATLEELQTVHSEAHTLLYGTNPLNRQKLDSKKLLGSLASVFVRLPCGGVGVDSDTIWNEVHSAGAARLAVGCVVELVFKVATGELKNGFAVVRPPGHHAEESTPMGFCYFNSVAVAAKLLQQRLSVSKILIVDWDVHHGNGTQQAFYSDPSVLYMSLHRYDDGNFFPGSGAPDEVGTGPGVGFNVNMAFTGGLDPPMGDAEYLAAFRTVVMPIASEFAPDVVLVSSGFDAVEGHPTPLGGYNLSARCFGYLTKQLMGLAGGRIVLALEGGHDLTAICDASEACVSALLGNELDPLPEKVLQQRPNANAVRSMEKVMEIHSKYWRCLQRTTSTAGRSLIEAQTCENEEAETVTAMASLSVGVKPAEKRPDEEPMEEEPPL</sequence>